<organism>
    <name type="scientific">Homo sapiens</name>
    <name type="common">Human</name>
    <dbReference type="NCBI Taxonomy" id="9606"/>
    <lineage>
        <taxon>Eukaryota</taxon>
        <taxon>Metazoa</taxon>
        <taxon>Chordata</taxon>
        <taxon>Craniata</taxon>
        <taxon>Vertebrata</taxon>
        <taxon>Euteleostomi</taxon>
        <taxon>Mammalia</taxon>
        <taxon>Eutheria</taxon>
        <taxon>Euarchontoglires</taxon>
        <taxon>Primates</taxon>
        <taxon>Haplorrhini</taxon>
        <taxon>Catarrhini</taxon>
        <taxon>Hominidae</taxon>
        <taxon>Homo</taxon>
    </lineage>
</organism>
<evidence type="ECO:0000255" key="1"/>
<evidence type="ECO:0000256" key="2">
    <source>
        <dbReference type="SAM" id="MobiDB-lite"/>
    </source>
</evidence>
<evidence type="ECO:0000269" key="3">
    <source>
    </source>
</evidence>
<evidence type="ECO:0000269" key="4">
    <source>
    </source>
</evidence>
<evidence type="ECO:0000303" key="5">
    <source>
    </source>
</evidence>
<evidence type="ECO:0000303" key="6">
    <source>
    </source>
</evidence>
<evidence type="ECO:0000305" key="7"/>
<sequence>MSVPVAPKKSCYTQLRDNRNAARNNNESILSLGDTNANQIMLEVSSSHDESKTCDLGDEIGNTNSSEPENRTHFHKEFHQLQGFGKGSQAGSASLKDFRLSSTIQRELNEEHTVERGTDSLQTTRSIQGPSLSSWRNVMSEASLDVLAKRDAEIPRHVPKDKLAKTLDNEELRRHSLERASSSVAAVGSLTPQHPQPLSLDSREARGQIPGGGEGPQKTLPDHAVPAAFPATDSTSEGKSVRHPKPSTSESKQSTPSETQTVGAHVLQVCSEHTSHSAHPEPALNLTLASKEIPSKLEAQLGQGKGEAKLDLKYVPPRRVEQEGKAAQEGYLGCHKEENLSALEGRDPCGEAHPEATDALGHLLNSDLHHLGVGRGNCEEKRGVNPGEQDSLHTTPKQGSASLGGADNQPTGKISPCAGEKLGERTSSSFSPGDSHVAFIPNNLTDSKPLDVIEEERRLGSGNKDSVMVLVFNPSVGENKTEVPEPLDPQSGRSEARESKEVTTSVAENRNLLENADKIESTSARADSVLNIPAPLHPETTVNMTYQPTTPSSSFQDVSVFGMDAGSPLVVPPPTDSARLLNTSPKVPDKNTCPSGIPKPVFTHSKDTPSSQEGMENYQVEKTEERTETKPIIMPKPKHVRPKIITYIRRNPQALGQVDASLVPVGLPYAPPTCTMPLPHEEKAAGGDLKPSANLYEKFKPDLQKPRVFSSGLMVSGIKPPGHPFSQMSEKFLQEVTDHPGKEEFCSPPYAHYEVPPTFYRSAMLLKPQLGLGAMSRLPSAKSRILIASQRSSASAIHPPGPITTATSLYSSDPSADLKKASSSNAAKSNLPKSGLRPPGYSRLPAAKLAAFGFVRSSSVSSVSSTQSGDSAQPEQGRPATRSTFGNEEQPVLKASLPSKDTPKGAGRVAPPASSSVTAPRRSLLPAPKSTSTPAGTKKDAQKDQDTNKPAVSSPKRVAASTTKLHSPGYPKQRTAAARNGFPPKPDPQAREAERQLVLRLKERCEQQTRQLGVAQGELKRAICGFDALAVATQHFFRKNESALVKEKELSIELANIRDEVAFHTAKCEKLQKEKEELERRFEDEVKRLGWQQQAELQELEERLQLQFEAEMARLQEEHGDQLLSIRCQHQEQVEDLTASHDAALLEMENNHTVAITILQDDHDHKVQELMSTHELEKKELEENFEKLRLSLQDQVDTLTFQSQSLRDRARRFEEALRKNTEEQLEIALAPYQHLEEDMKSLKQVLEMKNQQIHEQEKKILELEKLAEKNIILEEKIQVLQQQNEDLKARIDQNTVVTRQLSEENANLQEYVEKETQEKKRLSRTNEELLWKLQTGDPTSPIKLSPTSPVYRGSSSGPSSPARVSTTPR</sequence>
<gene>
    <name type="primary">MTUS2</name>
    <name type="synonym">CAZIP</name>
    <name type="synonym">KIAA0774</name>
    <name type="synonym">TIP150</name>
</gene>
<reference key="1">
    <citation type="journal article" date="1998" name="DNA Res.">
        <title>Prediction of the coding sequences of unidentified human genes. XI. The complete sequences of 100 new cDNA clones from brain which code for large proteins in vitro.</title>
        <authorList>
            <person name="Nagase T."/>
            <person name="Ishikawa K."/>
            <person name="Suyama M."/>
            <person name="Kikuno R."/>
            <person name="Miyajima N."/>
            <person name="Tanaka A."/>
            <person name="Kotani H."/>
            <person name="Nomura N."/>
            <person name="Ohara O."/>
        </authorList>
    </citation>
    <scope>NUCLEOTIDE SEQUENCE [LARGE SCALE MRNA] (ISOFORM 1)</scope>
    <source>
        <tissue>Brain</tissue>
    </source>
</reference>
<reference key="2">
    <citation type="submission" date="2005-08" db="EMBL/GenBank/DDBJ databases">
        <authorList>
            <person name="Ohara O."/>
            <person name="Suyama M."/>
            <person name="Nagase T."/>
            <person name="Ishikawa K."/>
            <person name="Kikuno R."/>
        </authorList>
    </citation>
    <scope>SEQUENCE REVISION</scope>
</reference>
<reference key="3">
    <citation type="journal article" date="2004" name="Nat. Genet.">
        <title>Complete sequencing and characterization of 21,243 full-length human cDNAs.</title>
        <authorList>
            <person name="Ota T."/>
            <person name="Suzuki Y."/>
            <person name="Nishikawa T."/>
            <person name="Otsuki T."/>
            <person name="Sugiyama T."/>
            <person name="Irie R."/>
            <person name="Wakamatsu A."/>
            <person name="Hayashi K."/>
            <person name="Sato H."/>
            <person name="Nagai K."/>
            <person name="Kimura K."/>
            <person name="Makita H."/>
            <person name="Sekine M."/>
            <person name="Obayashi M."/>
            <person name="Nishi T."/>
            <person name="Shibahara T."/>
            <person name="Tanaka T."/>
            <person name="Ishii S."/>
            <person name="Yamamoto J."/>
            <person name="Saito K."/>
            <person name="Kawai Y."/>
            <person name="Isono Y."/>
            <person name="Nakamura Y."/>
            <person name="Nagahari K."/>
            <person name="Murakami K."/>
            <person name="Yasuda T."/>
            <person name="Iwayanagi T."/>
            <person name="Wagatsuma M."/>
            <person name="Shiratori A."/>
            <person name="Sudo H."/>
            <person name="Hosoiri T."/>
            <person name="Kaku Y."/>
            <person name="Kodaira H."/>
            <person name="Kondo H."/>
            <person name="Sugawara M."/>
            <person name="Takahashi M."/>
            <person name="Kanda K."/>
            <person name="Yokoi T."/>
            <person name="Furuya T."/>
            <person name="Kikkawa E."/>
            <person name="Omura Y."/>
            <person name="Abe K."/>
            <person name="Kamihara K."/>
            <person name="Katsuta N."/>
            <person name="Sato K."/>
            <person name="Tanikawa M."/>
            <person name="Yamazaki M."/>
            <person name="Ninomiya K."/>
            <person name="Ishibashi T."/>
            <person name="Yamashita H."/>
            <person name="Murakawa K."/>
            <person name="Fujimori K."/>
            <person name="Tanai H."/>
            <person name="Kimata M."/>
            <person name="Watanabe M."/>
            <person name="Hiraoka S."/>
            <person name="Chiba Y."/>
            <person name="Ishida S."/>
            <person name="Ono Y."/>
            <person name="Takiguchi S."/>
            <person name="Watanabe S."/>
            <person name="Yosida M."/>
            <person name="Hotuta T."/>
            <person name="Kusano J."/>
            <person name="Kanehori K."/>
            <person name="Takahashi-Fujii A."/>
            <person name="Hara H."/>
            <person name="Tanase T.-O."/>
            <person name="Nomura Y."/>
            <person name="Togiya S."/>
            <person name="Komai F."/>
            <person name="Hara R."/>
            <person name="Takeuchi K."/>
            <person name="Arita M."/>
            <person name="Imose N."/>
            <person name="Musashino K."/>
            <person name="Yuuki H."/>
            <person name="Oshima A."/>
            <person name="Sasaki N."/>
            <person name="Aotsuka S."/>
            <person name="Yoshikawa Y."/>
            <person name="Matsunawa H."/>
            <person name="Ichihara T."/>
            <person name="Shiohata N."/>
            <person name="Sano S."/>
            <person name="Moriya S."/>
            <person name="Momiyama H."/>
            <person name="Satoh N."/>
            <person name="Takami S."/>
            <person name="Terashima Y."/>
            <person name="Suzuki O."/>
            <person name="Nakagawa S."/>
            <person name="Senoh A."/>
            <person name="Mizoguchi H."/>
            <person name="Goto Y."/>
            <person name="Shimizu F."/>
            <person name="Wakebe H."/>
            <person name="Hishigaki H."/>
            <person name="Watanabe T."/>
            <person name="Sugiyama A."/>
            <person name="Takemoto M."/>
            <person name="Kawakami B."/>
            <person name="Yamazaki M."/>
            <person name="Watanabe K."/>
            <person name="Kumagai A."/>
            <person name="Itakura S."/>
            <person name="Fukuzumi Y."/>
            <person name="Fujimori Y."/>
            <person name="Komiyama M."/>
            <person name="Tashiro H."/>
            <person name="Tanigami A."/>
            <person name="Fujiwara T."/>
            <person name="Ono T."/>
            <person name="Yamada K."/>
            <person name="Fujii Y."/>
            <person name="Ozaki K."/>
            <person name="Hirao M."/>
            <person name="Ohmori Y."/>
            <person name="Kawabata A."/>
            <person name="Hikiji T."/>
            <person name="Kobatake N."/>
            <person name="Inagaki H."/>
            <person name="Ikema Y."/>
            <person name="Okamoto S."/>
            <person name="Okitani R."/>
            <person name="Kawakami T."/>
            <person name="Noguchi S."/>
            <person name="Itoh T."/>
            <person name="Shigeta K."/>
            <person name="Senba T."/>
            <person name="Matsumura K."/>
            <person name="Nakajima Y."/>
            <person name="Mizuno T."/>
            <person name="Morinaga M."/>
            <person name="Sasaki M."/>
            <person name="Togashi T."/>
            <person name="Oyama M."/>
            <person name="Hata H."/>
            <person name="Watanabe M."/>
            <person name="Komatsu T."/>
            <person name="Mizushima-Sugano J."/>
            <person name="Satoh T."/>
            <person name="Shirai Y."/>
            <person name="Takahashi Y."/>
            <person name="Nakagawa K."/>
            <person name="Okumura K."/>
            <person name="Nagase T."/>
            <person name="Nomura N."/>
            <person name="Kikuchi H."/>
            <person name="Masuho Y."/>
            <person name="Yamashita R."/>
            <person name="Nakai K."/>
            <person name="Yada T."/>
            <person name="Nakamura Y."/>
            <person name="Ohara O."/>
            <person name="Isogai T."/>
            <person name="Sugano S."/>
        </authorList>
    </citation>
    <scope>NUCLEOTIDE SEQUENCE [LARGE SCALE MRNA] (ISOFORM 3)</scope>
    <source>
        <tissue>Cerebellum</tissue>
    </source>
</reference>
<reference key="4">
    <citation type="journal article" date="2004" name="Nature">
        <title>The DNA sequence and analysis of human chromosome 13.</title>
        <authorList>
            <person name="Dunham A."/>
            <person name="Matthews L.H."/>
            <person name="Burton J."/>
            <person name="Ashurst J.L."/>
            <person name="Howe K.L."/>
            <person name="Ashcroft K.J."/>
            <person name="Beare D.M."/>
            <person name="Burford D.C."/>
            <person name="Hunt S.E."/>
            <person name="Griffiths-Jones S."/>
            <person name="Jones M.C."/>
            <person name="Keenan S.J."/>
            <person name="Oliver K."/>
            <person name="Scott C.E."/>
            <person name="Ainscough R."/>
            <person name="Almeida J.P."/>
            <person name="Ambrose K.D."/>
            <person name="Andrews D.T."/>
            <person name="Ashwell R.I.S."/>
            <person name="Babbage A.K."/>
            <person name="Bagguley C.L."/>
            <person name="Bailey J."/>
            <person name="Bannerjee R."/>
            <person name="Barlow K.F."/>
            <person name="Bates K."/>
            <person name="Beasley H."/>
            <person name="Bird C.P."/>
            <person name="Bray-Allen S."/>
            <person name="Brown A.J."/>
            <person name="Brown J.Y."/>
            <person name="Burrill W."/>
            <person name="Carder C."/>
            <person name="Carter N.P."/>
            <person name="Chapman J.C."/>
            <person name="Clamp M.E."/>
            <person name="Clark S.Y."/>
            <person name="Clarke G."/>
            <person name="Clee C.M."/>
            <person name="Clegg S.C."/>
            <person name="Cobley V."/>
            <person name="Collins J.E."/>
            <person name="Corby N."/>
            <person name="Coville G.J."/>
            <person name="Deloukas P."/>
            <person name="Dhami P."/>
            <person name="Dunham I."/>
            <person name="Dunn M."/>
            <person name="Earthrowl M.E."/>
            <person name="Ellington A.G."/>
            <person name="Faulkner L."/>
            <person name="Frankish A.G."/>
            <person name="Frankland J."/>
            <person name="French L."/>
            <person name="Garner P."/>
            <person name="Garnett J."/>
            <person name="Gilbert J.G.R."/>
            <person name="Gilson C.J."/>
            <person name="Ghori J."/>
            <person name="Grafham D.V."/>
            <person name="Gribble S.M."/>
            <person name="Griffiths C."/>
            <person name="Hall R.E."/>
            <person name="Hammond S."/>
            <person name="Harley J.L."/>
            <person name="Hart E.A."/>
            <person name="Heath P.D."/>
            <person name="Howden P.J."/>
            <person name="Huckle E.J."/>
            <person name="Hunt P.J."/>
            <person name="Hunt A.R."/>
            <person name="Johnson C."/>
            <person name="Johnson D."/>
            <person name="Kay M."/>
            <person name="Kimberley A.M."/>
            <person name="King A."/>
            <person name="Laird G.K."/>
            <person name="Langford C.J."/>
            <person name="Lawlor S."/>
            <person name="Leongamornlert D.A."/>
            <person name="Lloyd D.M."/>
            <person name="Lloyd C."/>
            <person name="Loveland J.E."/>
            <person name="Lovell J."/>
            <person name="Martin S."/>
            <person name="Mashreghi-Mohammadi M."/>
            <person name="McLaren S.J."/>
            <person name="McMurray A."/>
            <person name="Milne S."/>
            <person name="Moore M.J.F."/>
            <person name="Nickerson T."/>
            <person name="Palmer S.A."/>
            <person name="Pearce A.V."/>
            <person name="Peck A.I."/>
            <person name="Pelan S."/>
            <person name="Phillimore B."/>
            <person name="Porter K.M."/>
            <person name="Rice C.M."/>
            <person name="Searle S."/>
            <person name="Sehra H.K."/>
            <person name="Shownkeen R."/>
            <person name="Skuce C.D."/>
            <person name="Smith M."/>
            <person name="Steward C.A."/>
            <person name="Sycamore N."/>
            <person name="Tester J."/>
            <person name="Thomas D.W."/>
            <person name="Tracey A."/>
            <person name="Tromans A."/>
            <person name="Tubby B."/>
            <person name="Wall M."/>
            <person name="Wallis J.M."/>
            <person name="West A.P."/>
            <person name="Whitehead S.L."/>
            <person name="Willey D.L."/>
            <person name="Wilming L."/>
            <person name="Wray P.W."/>
            <person name="Wright M.W."/>
            <person name="Young L."/>
            <person name="Coulson A."/>
            <person name="Durbin R.M."/>
            <person name="Hubbard T."/>
            <person name="Sulston J.E."/>
            <person name="Beck S."/>
            <person name="Bentley D.R."/>
            <person name="Rogers J."/>
            <person name="Ross M.T."/>
        </authorList>
    </citation>
    <scope>NUCLEOTIDE SEQUENCE [LARGE SCALE GENOMIC DNA]</scope>
</reference>
<reference key="5">
    <citation type="journal article" date="2004" name="Genome Res.">
        <title>The status, quality, and expansion of the NIH full-length cDNA project: the Mammalian Gene Collection (MGC).</title>
        <authorList>
            <consortium name="The MGC Project Team"/>
        </authorList>
    </citation>
    <scope>NUCLEOTIDE SEQUENCE [LARGE SCALE MRNA] (ISOFORMS 1; 2 AND 3)</scope>
    <source>
        <tissue>Pancreas</tissue>
    </source>
</reference>
<reference key="6">
    <citation type="journal article" date="2009" name="Dev. Dyn.">
        <title>CAZIP, a novel protein expressed in the developing heart and nervous system.</title>
        <authorList>
            <person name="Du Puy L."/>
            <person name="Beqqali A."/>
            <person name="Monshouwer-Kloots J."/>
            <person name="Haagsman H.P."/>
            <person name="Roelen B.A."/>
            <person name="Passier R."/>
        </authorList>
    </citation>
    <scope>TISSUE SPECIFICITY</scope>
</reference>
<reference key="7">
    <citation type="journal article" date="2009" name="EMBO Rep.">
        <title>TIP150 interacts with and targets MCAK at the microtubule plus ends.</title>
        <authorList>
            <person name="Jiang K."/>
            <person name="Wang J."/>
            <person name="Liu J."/>
            <person name="Ward T."/>
            <person name="Wordeman L."/>
            <person name="Davidson A."/>
            <person name="Wang F."/>
            <person name="Yao X."/>
        </authorList>
    </citation>
    <scope>FUNCTION</scope>
    <scope>INTERACTION WITH KIF2C AND MAPRE1</scope>
    <scope>HOMODIMERIZATION</scope>
    <scope>SUBCELLULAR LOCATION</scope>
</reference>
<dbReference type="EMBL" id="AB018317">
    <property type="protein sequence ID" value="BAA34494.2"/>
    <property type="status" value="ALT_INIT"/>
    <property type="molecule type" value="mRNA"/>
</dbReference>
<dbReference type="EMBL" id="AK293970">
    <property type="protein sequence ID" value="BAG57342.1"/>
    <property type="molecule type" value="mRNA"/>
</dbReference>
<dbReference type="EMBL" id="AL160255">
    <property type="status" value="NOT_ANNOTATED_CDS"/>
    <property type="molecule type" value="Genomic_DNA"/>
</dbReference>
<dbReference type="EMBL" id="AL596092">
    <property type="status" value="NOT_ANNOTATED_CDS"/>
    <property type="molecule type" value="Genomic_DNA"/>
</dbReference>
<dbReference type="EMBL" id="AL596114">
    <property type="status" value="NOT_ANNOTATED_CDS"/>
    <property type="molecule type" value="Genomic_DNA"/>
</dbReference>
<dbReference type="EMBL" id="AL607144">
    <property type="status" value="NOT_ANNOTATED_CDS"/>
    <property type="molecule type" value="Genomic_DNA"/>
</dbReference>
<dbReference type="EMBL" id="BC032481">
    <property type="protein sequence ID" value="AAH32481.1"/>
    <property type="molecule type" value="mRNA"/>
</dbReference>
<dbReference type="EMBL" id="BC119654">
    <property type="protein sequence ID" value="AAI19655.1"/>
    <property type="molecule type" value="mRNA"/>
</dbReference>
<dbReference type="EMBL" id="BC119655">
    <property type="protein sequence ID" value="AAI19656.1"/>
    <property type="molecule type" value="mRNA"/>
</dbReference>
<dbReference type="EMBL" id="BC129985">
    <property type="protein sequence ID" value="AAI29986.1"/>
    <property type="molecule type" value="mRNA"/>
</dbReference>
<dbReference type="EMBL" id="BC150245">
    <property type="protein sequence ID" value="AAI50246.1"/>
    <property type="status" value="ALT_INIT"/>
    <property type="molecule type" value="mRNA"/>
</dbReference>
<dbReference type="CCDS" id="CCDS41874.1">
    <molecule id="Q5JR59-3"/>
</dbReference>
<dbReference type="CCDS" id="CCDS45022.2">
    <molecule id="Q5JR59-2"/>
</dbReference>
<dbReference type="RefSeq" id="NP_001028774.3">
    <molecule id="Q5JR59-2"/>
    <property type="nucleotide sequence ID" value="NM_001033602.4"/>
</dbReference>
<dbReference type="RefSeq" id="NP_001371534.1">
    <molecule id="Q5JR59-2"/>
    <property type="nucleotide sequence ID" value="NM_001384605.1"/>
</dbReference>
<dbReference type="RefSeq" id="NP_001371535.1">
    <molecule id="Q5JR59-2"/>
    <property type="nucleotide sequence ID" value="NM_001384606.1"/>
</dbReference>
<dbReference type="RefSeq" id="NP_056048.1">
    <molecule id="Q5JR59-3"/>
    <property type="nucleotide sequence ID" value="NM_015233.6"/>
</dbReference>
<dbReference type="SMR" id="Q5JR59"/>
<dbReference type="BioGRID" id="116880">
    <property type="interactions" value="392"/>
</dbReference>
<dbReference type="FunCoup" id="Q5JR59">
    <property type="interactions" value="498"/>
</dbReference>
<dbReference type="IntAct" id="Q5JR59">
    <property type="interactions" value="379"/>
</dbReference>
<dbReference type="MINT" id="Q5JR59"/>
<dbReference type="STRING" id="9606.ENSP00000498251"/>
<dbReference type="GlyGen" id="Q5JR59">
    <property type="glycosylation" value="5 sites, 1 O-linked glycan (4 sites)"/>
</dbReference>
<dbReference type="iPTMnet" id="Q5JR59"/>
<dbReference type="PhosphoSitePlus" id="Q5JR59"/>
<dbReference type="SwissPalm" id="Q5JR59"/>
<dbReference type="BioMuta" id="MTUS2"/>
<dbReference type="DMDM" id="259016371"/>
<dbReference type="jPOST" id="Q5JR59"/>
<dbReference type="MassIVE" id="Q5JR59"/>
<dbReference type="PaxDb" id="9606-ENSP00000483729"/>
<dbReference type="PeptideAtlas" id="Q5JR59"/>
<dbReference type="ProteomicsDB" id="63070">
    <molecule id="Q5JR59-2"/>
</dbReference>
<dbReference type="ProteomicsDB" id="63071">
    <molecule id="Q5JR59-3"/>
</dbReference>
<dbReference type="ProteomicsDB" id="63072">
    <molecule id="Q5JR59-4"/>
</dbReference>
<dbReference type="Antibodypedia" id="22727">
    <property type="antibodies" value="92 antibodies from 26 providers"/>
</dbReference>
<dbReference type="DNASU" id="23281"/>
<dbReference type="Ensembl" id="ENST00000380808.6">
    <molecule id="Q5JR59-3"/>
    <property type="protein sequence ID" value="ENSP00000370186.2"/>
    <property type="gene ID" value="ENSG00000132938.22"/>
</dbReference>
<dbReference type="Ensembl" id="ENST00000542829.1">
    <molecule id="Q5JR59-4"/>
    <property type="protein sequence ID" value="ENSP00000445403.1"/>
    <property type="gene ID" value="ENSG00000132938.22"/>
</dbReference>
<dbReference type="Ensembl" id="ENST00000612955.6">
    <molecule id="Q5JR59-2"/>
    <property type="protein sequence ID" value="ENSP00000483729.2"/>
    <property type="gene ID" value="ENSG00000132938.22"/>
</dbReference>
<dbReference type="GeneID" id="23281"/>
<dbReference type="KEGG" id="hsa:23281"/>
<dbReference type="MANE-Select" id="ENST00000612955.6">
    <property type="protein sequence ID" value="ENSP00000483729.2"/>
    <property type="RefSeq nucleotide sequence ID" value="NM_001033602.4"/>
    <property type="RefSeq protein sequence ID" value="NP_001028774.3"/>
</dbReference>
<dbReference type="UCSC" id="uc001usm.5">
    <molecule id="Q5JR59-2"/>
    <property type="organism name" value="human"/>
</dbReference>
<dbReference type="AGR" id="HGNC:20595"/>
<dbReference type="CTD" id="23281"/>
<dbReference type="DisGeNET" id="23281"/>
<dbReference type="GeneCards" id="MTUS2"/>
<dbReference type="HGNC" id="HGNC:20595">
    <property type="gene designation" value="MTUS2"/>
</dbReference>
<dbReference type="HPA" id="ENSG00000132938">
    <property type="expression patterns" value="Tissue enriched (heart)"/>
</dbReference>
<dbReference type="MIM" id="619358">
    <property type="type" value="gene"/>
</dbReference>
<dbReference type="neXtProt" id="NX_Q5JR59"/>
<dbReference type="OpenTargets" id="ENSG00000132938"/>
<dbReference type="PharmGKB" id="PA165505194"/>
<dbReference type="VEuPathDB" id="HostDB:ENSG00000132938"/>
<dbReference type="eggNOG" id="ENOG502QQFP">
    <property type="taxonomic scope" value="Eukaryota"/>
</dbReference>
<dbReference type="GeneTree" id="ENSGT00950000183026"/>
<dbReference type="HOGENOM" id="CLU_029786_0_0_1"/>
<dbReference type="InParanoid" id="Q5JR59"/>
<dbReference type="OMA" id="QQPDNHD"/>
<dbReference type="OrthoDB" id="10038993at2759"/>
<dbReference type="PAN-GO" id="Q5JR59">
    <property type="GO annotations" value="3 GO annotations based on evolutionary models"/>
</dbReference>
<dbReference type="PhylomeDB" id="Q5JR59"/>
<dbReference type="PathwayCommons" id="Q5JR59"/>
<dbReference type="SignaLink" id="Q5JR59"/>
<dbReference type="BioGRID-ORCS" id="23281">
    <property type="hits" value="9 hits in 1145 CRISPR screens"/>
</dbReference>
<dbReference type="ChiTaRS" id="MTUS2">
    <property type="organism name" value="human"/>
</dbReference>
<dbReference type="GenomeRNAi" id="23281"/>
<dbReference type="Pharos" id="Q5JR59">
    <property type="development level" value="Tbio"/>
</dbReference>
<dbReference type="PRO" id="PR:Q5JR59"/>
<dbReference type="Proteomes" id="UP000005640">
    <property type="component" value="Chromosome 13"/>
</dbReference>
<dbReference type="RNAct" id="Q5JR59">
    <property type="molecule type" value="protein"/>
</dbReference>
<dbReference type="Bgee" id="ENSG00000132938">
    <property type="expression patterns" value="Expressed in heart right ventricle and 140 other cell types or tissues"/>
</dbReference>
<dbReference type="GO" id="GO:0005737">
    <property type="term" value="C:cytoplasm"/>
    <property type="evidence" value="ECO:0007669"/>
    <property type="project" value="UniProtKB-KW"/>
</dbReference>
<dbReference type="GO" id="GO:0045171">
    <property type="term" value="C:intercellular bridge"/>
    <property type="evidence" value="ECO:0000314"/>
    <property type="project" value="HPA"/>
</dbReference>
<dbReference type="GO" id="GO:0005874">
    <property type="term" value="C:microtubule"/>
    <property type="evidence" value="ECO:0007669"/>
    <property type="project" value="UniProtKB-KW"/>
</dbReference>
<dbReference type="GO" id="GO:0015630">
    <property type="term" value="C:microtubule cytoskeleton"/>
    <property type="evidence" value="ECO:0000314"/>
    <property type="project" value="HPA"/>
</dbReference>
<dbReference type="GO" id="GO:0005634">
    <property type="term" value="C:nucleus"/>
    <property type="evidence" value="ECO:0000314"/>
    <property type="project" value="CACAO"/>
</dbReference>
<dbReference type="GO" id="GO:0008017">
    <property type="term" value="F:microtubule binding"/>
    <property type="evidence" value="ECO:0000314"/>
    <property type="project" value="UniProtKB"/>
</dbReference>
<dbReference type="GO" id="GO:0042803">
    <property type="term" value="F:protein homodimerization activity"/>
    <property type="evidence" value="ECO:0000353"/>
    <property type="project" value="UniProtKB"/>
</dbReference>
<dbReference type="InterPro" id="IPR051293">
    <property type="entry name" value="MTUS1/CCDC69"/>
</dbReference>
<dbReference type="PANTHER" id="PTHR24200:SF14">
    <property type="entry name" value="MICROTUBULE-ASSOCIATED TUMOR SUPPRESSOR CANDIDATE 2"/>
    <property type="match status" value="1"/>
</dbReference>
<dbReference type="PANTHER" id="PTHR24200">
    <property type="entry name" value="TOUCAN, ISOFORM A"/>
    <property type="match status" value="1"/>
</dbReference>
<keyword id="KW-0025">Alternative splicing</keyword>
<keyword id="KW-0175">Coiled coil</keyword>
<keyword id="KW-0963">Cytoplasm</keyword>
<keyword id="KW-0206">Cytoskeleton</keyword>
<keyword id="KW-0493">Microtubule</keyword>
<keyword id="KW-1267">Proteomics identification</keyword>
<keyword id="KW-1185">Reference proteome</keyword>
<name>MTUS2_HUMAN</name>
<proteinExistence type="evidence at protein level"/>
<accession>Q5JR59</accession>
<accession>A7E292</accession>
<accession>B4DF81</accession>
<accession>O94872</accession>
<accession>Q08E97</accession>
<accession>Q5JQR3</accession>
<accession>Q8N5E2</accession>
<feature type="chain" id="PRO_0000280111" description="Microtubule-associated tumor suppressor candidate 2">
    <location>
        <begin position="1"/>
        <end position="1369"/>
    </location>
</feature>
<feature type="region of interest" description="Disordered" evidence="2">
    <location>
        <begin position="180"/>
        <end position="262"/>
    </location>
</feature>
<feature type="region of interest" description="Disordered" evidence="2">
    <location>
        <begin position="374"/>
        <end position="442"/>
    </location>
</feature>
<feature type="region of interest" description="Disordered" evidence="2">
    <location>
        <begin position="477"/>
        <end position="509"/>
    </location>
</feature>
<feature type="region of interest" description="Disordered" evidence="2">
    <location>
        <begin position="582"/>
        <end position="627"/>
    </location>
</feature>
<feature type="region of interest" description="Mediates interaction with MAPRE1" evidence="3">
    <location>
        <begin position="641"/>
        <end position="980"/>
    </location>
</feature>
<feature type="region of interest" description="Disordered" evidence="2">
    <location>
        <begin position="791"/>
        <end position="839"/>
    </location>
</feature>
<feature type="region of interest" description="Localization to the growing distal tip of microtubules">
    <location>
        <begin position="801"/>
        <end position="1150"/>
    </location>
</feature>
<feature type="region of interest" description="Sufficient for interaction with KIF2C" evidence="3">
    <location>
        <begin position="801"/>
        <end position="890"/>
    </location>
</feature>
<feature type="region of interest" description="Disordered" evidence="2">
    <location>
        <begin position="861"/>
        <end position="992"/>
    </location>
</feature>
<feature type="region of interest" description="Disordered" evidence="2">
    <location>
        <begin position="1331"/>
        <end position="1369"/>
    </location>
</feature>
<feature type="coiled-coil region" evidence="1">
    <location>
        <begin position="991"/>
        <end position="1335"/>
    </location>
</feature>
<feature type="compositionally biased region" description="Polar residues" evidence="2">
    <location>
        <begin position="246"/>
        <end position="262"/>
    </location>
</feature>
<feature type="compositionally biased region" description="Polar residues" evidence="2">
    <location>
        <begin position="392"/>
        <end position="401"/>
    </location>
</feature>
<feature type="compositionally biased region" description="Polar residues" evidence="2">
    <location>
        <begin position="804"/>
        <end position="814"/>
    </location>
</feature>
<feature type="compositionally biased region" description="Low complexity" evidence="2">
    <location>
        <begin position="821"/>
        <end position="834"/>
    </location>
</feature>
<feature type="compositionally biased region" description="Basic and acidic residues" evidence="2">
    <location>
        <begin position="937"/>
        <end position="947"/>
    </location>
</feature>
<feature type="compositionally biased region" description="Low complexity" evidence="2">
    <location>
        <begin position="1348"/>
        <end position="1369"/>
    </location>
</feature>
<feature type="splice variant" id="VSP_023540" description="In isoform 3." evidence="5 6">
    <location>
        <begin position="1"/>
        <end position="1111"/>
    </location>
</feature>
<feature type="splice variant" id="VSP_023541" description="In isoform 2." evidence="6">
    <location>
        <begin position="1"/>
        <end position="1021"/>
    </location>
</feature>
<feature type="splice variant" id="VSP_023543" description="In isoform 2." evidence="6">
    <original>AICGFDALAVATQHFFRK</original>
    <variation>MGHCCCKPYNCLQCLDKT</variation>
    <location>
        <begin position="1022"/>
        <end position="1039"/>
    </location>
</feature>
<feature type="sequence variant" id="VAR_055941" description="In dbSNP:rs12874207.">
    <original>P</original>
    <variation>H</variation>
    <location>
        <position position="955"/>
    </location>
</feature>
<feature type="sequence variant" id="VAR_058831" description="In dbSNP:rs17073511.">
    <original>L</original>
    <variation>Q</variation>
    <location>
        <position position="1071"/>
    </location>
</feature>
<feature type="sequence conflict" description="In Ref. 1; BAA34494 and 5; AAI50246." evidence="7" ref="1 5">
    <original>Q</original>
    <variation>P</variation>
    <location>
        <position position="942"/>
    </location>
</feature>
<comment type="function">
    <text evidence="3">Binds microtubules. Together with MAPRE1 may target the microtubule depolymerase KIF2C to the plus-end of microtubules. May regulate the dynamics of microtubules at their growing distal tip.</text>
</comment>
<comment type="subunit">
    <text evidence="3">Homodimer. Interacts with KIF2C and MAPRE1; the interaction is direct and probably targets MTUS2 and KIF2C to microtubules.</text>
</comment>
<comment type="interaction">
    <interactant intactId="EBI-742948">
        <id>Q5JR59</id>
    </interactant>
    <interactant intactId="EBI-8637627">
        <id>Q8WTP8</id>
        <label>AEN</label>
    </interactant>
    <organismsDiffer>false</organismsDiffer>
    <experiments>3</experiments>
</comment>
<comment type="interaction">
    <interactant intactId="EBI-742948">
        <id>Q5JR59</id>
    </interactant>
    <interactant intactId="EBI-395282">
        <id>Q9UHB7</id>
        <label>AFF4</label>
    </interactant>
    <organismsDiffer>false</organismsDiffer>
    <experiments>3</experiments>
</comment>
<comment type="interaction">
    <interactant intactId="EBI-742948">
        <id>Q5JR59</id>
    </interactant>
    <interactant intactId="EBI-10261324">
        <id>Q9UHB7-2</id>
        <label>AFF4</label>
    </interactant>
    <organismsDiffer>false</organismsDiffer>
    <experiments>3</experiments>
</comment>
<comment type="interaction">
    <interactant intactId="EBI-742948">
        <id>Q5JR59</id>
    </interactant>
    <interactant intactId="EBI-8643161">
        <id>Q9NX04</id>
        <label>AIRIM</label>
    </interactant>
    <organismsDiffer>false</organismsDiffer>
    <experiments>3</experiments>
</comment>
<comment type="interaction">
    <interactant intactId="EBI-742948">
        <id>Q5JR59</id>
    </interactant>
    <interactant intactId="EBI-745213">
        <id>P29972</id>
        <label>AQP1</label>
    </interactant>
    <organismsDiffer>false</organismsDiffer>
    <experiments>3</experiments>
</comment>
<comment type="interaction">
    <interactant intactId="EBI-742948">
        <id>Q5JR59</id>
    </interactant>
    <interactant intactId="EBI-10174327">
        <id>A8K571</id>
        <label>BMP7</label>
    </interactant>
    <organismsDiffer>false</organismsDiffer>
    <experiments>3</experiments>
</comment>
<comment type="interaction">
    <interactant intactId="EBI-742948">
        <id>Q5JR59</id>
    </interactant>
    <interactant intactId="EBI-358049">
        <id>Q13895</id>
        <label>BYSL</label>
    </interactant>
    <organismsDiffer>false</organismsDiffer>
    <experiments>5</experiments>
</comment>
<comment type="interaction">
    <interactant intactId="EBI-742948">
        <id>Q5JR59</id>
    </interactant>
    <interactant intactId="EBI-747505">
        <id>Q8TAB5</id>
        <label>C1orf216</label>
    </interactant>
    <organismsDiffer>false</organismsDiffer>
    <experiments>4</experiments>
</comment>
<comment type="interaction">
    <interactant intactId="EBI-742948">
        <id>Q5JR59</id>
    </interactant>
    <interactant intactId="EBI-10226774">
        <id>Q0VAL7</id>
        <label>C21orf58</label>
    </interactant>
    <organismsDiffer>false</organismsDiffer>
    <experiments>3</experiments>
</comment>
<comment type="interaction">
    <interactant intactId="EBI-742948">
        <id>Q5JR59</id>
    </interactant>
    <interactant intactId="EBI-739879">
        <id>Q53TS8</id>
        <label>C2CD6</label>
    </interactant>
    <organismsDiffer>false</organismsDiffer>
    <experiments>3</experiments>
</comment>
<comment type="interaction">
    <interactant intactId="EBI-742948">
        <id>Q5JR59</id>
    </interactant>
    <interactant intactId="EBI-10258233">
        <id>Q7Z7H3</id>
        <label>CATIP</label>
    </interactant>
    <organismsDiffer>false</organismsDiffer>
    <experiments>3</experiments>
</comment>
<comment type="interaction">
    <interactant intactId="EBI-742948">
        <id>Q5JR59</id>
    </interactant>
    <interactant intactId="EBI-744545">
        <id>Q8NEC5</id>
        <label>CATSPER1</label>
    </interactant>
    <organismsDiffer>false</organismsDiffer>
    <experiments>3</experiments>
</comment>
<comment type="interaction">
    <interactant intactId="EBI-742948">
        <id>Q5JR59</id>
    </interactant>
    <interactant intactId="EBI-712912">
        <id>Q9HC52</id>
        <label>CBX8</label>
    </interactant>
    <organismsDiffer>false</organismsDiffer>
    <experiments>3</experiments>
</comment>
<comment type="interaction">
    <interactant intactId="EBI-742948">
        <id>Q5JR59</id>
    </interactant>
    <interactant intactId="EBI-744311">
        <id>Q8IYX3</id>
        <label>CCDC116</label>
    </interactant>
    <organismsDiffer>false</organismsDiffer>
    <experiments>4</experiments>
</comment>
<comment type="interaction">
    <interactant intactId="EBI-742948">
        <id>Q5JR59</id>
    </interactant>
    <interactant intactId="EBI-10247802">
        <id>Q8IYE0-2</id>
        <label>CCDC146</label>
    </interactant>
    <organismsDiffer>false</organismsDiffer>
    <experiments>3</experiments>
</comment>
<comment type="interaction">
    <interactant intactId="EBI-742948">
        <id>Q5JR59</id>
    </interactant>
    <interactant intactId="EBI-719840">
        <id>Q96LX7</id>
        <label>CCDC17</label>
    </interactant>
    <organismsDiffer>false</organismsDiffer>
    <experiments>3</experiments>
</comment>
<comment type="interaction">
    <interactant intactId="EBI-742948">
        <id>Q5JR59</id>
    </interactant>
    <interactant intactId="EBI-10238351">
        <id>Q9NVL8</id>
        <label>CCDC198</label>
    </interactant>
    <organismsDiffer>false</organismsDiffer>
    <experiments>3</experiments>
</comment>
<comment type="interaction">
    <interactant intactId="EBI-742948">
        <id>Q5JR59</id>
    </interactant>
    <interactant intactId="EBI-10262147">
        <id>Q8IWA6</id>
        <label>CCDC60</label>
    </interactant>
    <organismsDiffer>false</organismsDiffer>
    <experiments>4</experiments>
</comment>
<comment type="interaction">
    <interactant intactId="EBI-742948">
        <id>Q5JR59</id>
    </interactant>
    <interactant intactId="EBI-10175300">
        <id>Q8TD31-3</id>
        <label>CCHCR1</label>
    </interactant>
    <organismsDiffer>false</organismsDiffer>
    <experiments>3</experiments>
</comment>
<comment type="interaction">
    <interactant intactId="EBI-742948">
        <id>Q5JR59</id>
    </interactant>
    <interactant intactId="EBI-10260504">
        <id>Q86Y33</id>
        <label>CDC20B</label>
    </interactant>
    <organismsDiffer>false</organismsDiffer>
    <experiments>3</experiments>
</comment>
<comment type="interaction">
    <interactant intactId="EBI-742948">
        <id>Q5JR59</id>
    </interactant>
    <interactant intactId="EBI-930143">
        <id>Q6P1J9</id>
        <label>CDC73</label>
    </interactant>
    <organismsDiffer>false</organismsDiffer>
    <experiments>5</experiments>
</comment>
<comment type="interaction">
    <interactant intactId="EBI-742948">
        <id>Q5JR59</id>
    </interactant>
    <interactant intactId="EBI-746238">
        <id>Q07002</id>
        <label>CDK18</label>
    </interactant>
    <organismsDiffer>false</organismsDiffer>
    <experiments>3</experiments>
</comment>
<comment type="interaction">
    <interactant intactId="EBI-742948">
        <id>Q5JR59</id>
    </interactant>
    <interactant intactId="EBI-746189">
        <id>Q15078</id>
        <label>CDK5R1</label>
    </interactant>
    <organismsDiffer>false</organismsDiffer>
    <experiments>3</experiments>
</comment>
<comment type="interaction">
    <interactant intactId="EBI-742948">
        <id>Q5JR59</id>
    </interactant>
    <interactant intactId="EBI-10266998">
        <id>Q8N619</id>
        <label>CDK5R1</label>
    </interactant>
    <organismsDiffer>false</organismsDiffer>
    <experiments>3</experiments>
</comment>
<comment type="interaction">
    <interactant intactId="EBI-742948">
        <id>Q5JR59</id>
    </interactant>
    <interactant intactId="EBI-10271838">
        <id>Q8TAM4</id>
        <label>CDK5R1</label>
    </interactant>
    <organismsDiffer>false</organismsDiffer>
    <experiments>3</experiments>
</comment>
<comment type="interaction">
    <interactant intactId="EBI-742948">
        <id>Q5JR59</id>
    </interactant>
    <interactant intactId="EBI-3919850">
        <id>Q8IVW4</id>
        <label>CDKL3</label>
    </interactant>
    <organismsDiffer>false</organismsDiffer>
    <experiments>3</experiments>
</comment>
<comment type="interaction">
    <interactant intactId="EBI-742948">
        <id>Q5JR59</id>
    </interactant>
    <interactant intactId="EBI-1104570">
        <id>Q8IYX8</id>
        <label>CEP57L1</label>
    </interactant>
    <organismsDiffer>false</organismsDiffer>
    <experiments>3</experiments>
</comment>
<comment type="interaction">
    <interactant intactId="EBI-742948">
        <id>Q5JR59</id>
    </interactant>
    <interactant intactId="EBI-10181988">
        <id>Q8IYX8-2</id>
        <label>CEP57L1</label>
    </interactant>
    <organismsDiffer>false</organismsDiffer>
    <experiments>3</experiments>
</comment>
<comment type="interaction">
    <interactant intactId="EBI-742948">
        <id>Q5JR59</id>
    </interactant>
    <interactant intactId="EBI-372775">
        <id>Q96GE4</id>
        <label>CEP95</label>
    </interactant>
    <organismsDiffer>false</organismsDiffer>
    <experiments>3</experiments>
</comment>
<comment type="interaction">
    <interactant intactId="EBI-742948">
        <id>Q5JR59</id>
    </interactant>
    <interactant intactId="EBI-10274247">
        <id>Q8TCT0</id>
        <label>CERK</label>
    </interactant>
    <organismsDiffer>false</organismsDiffer>
    <experiments>3</experiments>
</comment>
<comment type="interaction">
    <interactant intactId="EBI-742948">
        <id>Q5JR59</id>
    </interactant>
    <interactant intactId="EBI-10233912">
        <id>Q14746-2</id>
        <label>COG2</label>
    </interactant>
    <organismsDiffer>false</organismsDiffer>
    <experiments>3</experiments>
</comment>
<comment type="interaction">
    <interactant intactId="EBI-742948">
        <id>Q5JR59</id>
    </interactant>
    <interactant intactId="EBI-10192698">
        <id>Q02930-3</id>
        <label>CREB5</label>
    </interactant>
    <organismsDiffer>false</organismsDiffer>
    <experiments>3</experiments>
</comment>
<comment type="interaction">
    <interactant intactId="EBI-742948">
        <id>Q5JR59</id>
    </interactant>
    <interactant intactId="EBI-2212355">
        <id>Q49AN0</id>
        <label>CRY2</label>
    </interactant>
    <organismsDiffer>false</organismsDiffer>
    <experiments>3</experiments>
</comment>
<comment type="interaction">
    <interactant intactId="EBI-742948">
        <id>Q5JR59</id>
    </interactant>
    <interactant intactId="EBI-8636823">
        <id>Q9UBR2</id>
        <label>CTSZ</label>
    </interactant>
    <organismsDiffer>false</organismsDiffer>
    <experiments>3</experiments>
</comment>
<comment type="interaction">
    <interactant intactId="EBI-742948">
        <id>Q5JR59</id>
    </interactant>
    <interactant intactId="EBI-5453285">
        <id>Q2TBE0</id>
        <label>CWF19L2</label>
    </interactant>
    <organismsDiffer>false</organismsDiffer>
    <experiments>3</experiments>
</comment>
<comment type="interaction">
    <interactant intactId="EBI-742948">
        <id>Q5JR59</id>
    </interactant>
    <interactant intactId="EBI-2871971">
        <id>O14625</id>
        <label>CXCL11</label>
    </interactant>
    <organismsDiffer>false</organismsDiffer>
    <experiments>3</experiments>
</comment>
<comment type="interaction">
    <interactant intactId="EBI-742948">
        <id>Q5JR59</id>
    </interactant>
    <interactant intactId="EBI-10173222">
        <id>A2VCK2</id>
        <label>DCDC2B</label>
    </interactant>
    <organismsDiffer>false</organismsDiffer>
    <experiments>3</experiments>
</comment>
<comment type="interaction">
    <interactant intactId="EBI-742948">
        <id>Q5JR59</id>
    </interactant>
    <interactant intactId="EBI-2134033">
        <id>Q9UJW0</id>
        <label>DCTN4</label>
    </interactant>
    <organismsDiffer>false</organismsDiffer>
    <experiments>4</experiments>
</comment>
<comment type="interaction">
    <interactant intactId="EBI-742948">
        <id>Q5JR59</id>
    </interactant>
    <interactant intactId="EBI-748280">
        <id>Q15398</id>
        <label>DLGAP5</label>
    </interactant>
    <organismsDiffer>false</organismsDiffer>
    <experiments>3</experiments>
</comment>
<comment type="interaction">
    <interactant intactId="EBI-742948">
        <id>Q5JR59</id>
    </interactant>
    <interactant intactId="EBI-9679045">
        <id>Q9NQL9</id>
        <label>DMRT3</label>
    </interactant>
    <organismsDiffer>false</organismsDiffer>
    <experiments>3</experiments>
</comment>
<comment type="interaction">
    <interactant intactId="EBI-742948">
        <id>Q5JR59</id>
    </interactant>
    <interactant intactId="EBI-448771">
        <id>Q92608</id>
        <label>DOCK2</label>
    </interactant>
    <organismsDiffer>false</organismsDiffer>
    <experiments>3</experiments>
</comment>
<comment type="interaction">
    <interactant intactId="EBI-742948">
        <id>Q5JR59</id>
    </interactant>
    <interactant intactId="EBI-740402">
        <id>O60941</id>
        <label>DTNB</label>
    </interactant>
    <organismsDiffer>false</organismsDiffer>
    <experiments>3</experiments>
</comment>
<comment type="interaction">
    <interactant intactId="EBI-742948">
        <id>Q5JR59</id>
    </interactant>
    <interactant intactId="EBI-751248">
        <id>Q8NE31</id>
        <label>FAM13C</label>
    </interactant>
    <organismsDiffer>false</organismsDiffer>
    <experiments>3</experiments>
</comment>
<comment type="interaction">
    <interactant intactId="EBI-742948">
        <id>Q5JR59</id>
    </interactant>
    <interactant intactId="EBI-719941">
        <id>Q3B820</id>
        <label>FAM161A</label>
    </interactant>
    <organismsDiffer>false</organismsDiffer>
    <experiments>3</experiments>
</comment>
<comment type="interaction">
    <interactant intactId="EBI-742948">
        <id>Q5JR59</id>
    </interactant>
    <interactant intactId="EBI-6658203">
        <id>Q86YD7</id>
        <label>FAM90A1</label>
    </interactant>
    <organismsDiffer>false</organismsDiffer>
    <experiments>3</experiments>
</comment>
<comment type="interaction">
    <interactant intactId="EBI-742948">
        <id>Q5JR59</id>
    </interactant>
    <interactant intactId="EBI-744419">
        <id>Q96D16</id>
        <label>FBXL18</label>
    </interactant>
    <organismsDiffer>false</organismsDiffer>
    <experiments>3</experiments>
</comment>
<comment type="interaction">
    <interactant intactId="EBI-742948">
        <id>Q5JR59</id>
    </interactant>
    <interactant intactId="EBI-719816">
        <id>Q9NWN3</id>
        <label>FBXO34</label>
    </interactant>
    <organismsDiffer>false</organismsDiffer>
    <experiments>3</experiments>
</comment>
<comment type="interaction">
    <interactant intactId="EBI-742948">
        <id>Q5JR59</id>
    </interactant>
    <interactant intactId="EBI-1215612">
        <id>O94868</id>
        <label>FCHSD2</label>
    </interactant>
    <organismsDiffer>false</organismsDiffer>
    <experiments>4</experiments>
</comment>
<comment type="interaction">
    <interactant intactId="EBI-742948">
        <id>Q5JR59</id>
    </interactant>
    <interactant intactId="EBI-744935">
        <id>Q9BVV2</id>
        <label>FNDC11</label>
    </interactant>
    <organismsDiffer>false</organismsDiffer>
    <experiments>3</experiments>
</comment>
<comment type="interaction">
    <interactant intactId="EBI-742948">
        <id>Q5JR59</id>
    </interactant>
    <interactant intactId="EBI-10306373">
        <id>Q9H3Q3</id>
        <label>GAL3ST2</label>
    </interactant>
    <organismsDiffer>false</organismsDiffer>
    <experiments>3</experiments>
</comment>
<comment type="interaction">
    <interactant intactId="EBI-742948">
        <id>Q5JR59</id>
    </interactant>
    <interactant intactId="EBI-5453796">
        <id>A4D1E9</id>
        <label>GTPBP10</label>
    </interactant>
    <organismsDiffer>false</organismsDiffer>
    <experiments>3</experiments>
</comment>
<comment type="interaction">
    <interactant intactId="EBI-742948">
        <id>Q5JR59</id>
    </interactant>
    <interactant intactId="EBI-2514791">
        <id>Q96CS2</id>
        <label>HAUS1</label>
    </interactant>
    <organismsDiffer>false</organismsDiffer>
    <experiments>3</experiments>
</comment>
<comment type="interaction">
    <interactant intactId="EBI-742948">
        <id>Q5JR59</id>
    </interactant>
    <interactant intactId="EBI-346340">
        <id>P08631</id>
        <label>HCK</label>
    </interactant>
    <organismsDiffer>false</organismsDiffer>
    <experiments>3</experiments>
</comment>
<comment type="interaction">
    <interactant intactId="EBI-742948">
        <id>Q5JR59</id>
    </interactant>
    <interactant intactId="EBI-308629">
        <id>P56524</id>
        <label>HDAC4</label>
    </interactant>
    <organismsDiffer>false</organismsDiffer>
    <experiments>3</experiments>
</comment>
<comment type="interaction">
    <interactant intactId="EBI-742948">
        <id>Q5JR59</id>
    </interactant>
    <interactant intactId="EBI-10223348">
        <id>Q03933-2</id>
        <label>HSF2</label>
    </interactant>
    <organismsDiffer>false</organismsDiffer>
    <experiments>3</experiments>
</comment>
<comment type="interaction">
    <interactant intactId="EBI-742948">
        <id>Q5JR59</id>
    </interactant>
    <interactant intactId="EBI-10178729">
        <id>L7RT22</id>
        <label>ITGB5</label>
    </interactant>
    <organismsDiffer>false</organismsDiffer>
    <experiments>3</experiments>
</comment>
<comment type="interaction">
    <interactant intactId="EBI-742948">
        <id>Q5JR59</id>
    </interactant>
    <interactant intactId="EBI-399080">
        <id>Q92993</id>
        <label>KAT5</label>
    </interactant>
    <organismsDiffer>false</organismsDiffer>
    <experiments>3</experiments>
</comment>
<comment type="interaction">
    <interactant intactId="EBI-742948">
        <id>Q5JR59</id>
    </interactant>
    <interactant intactId="EBI-1642317">
        <id>Q99661</id>
        <label>KIF2C</label>
    </interactant>
    <organismsDiffer>false</organismsDiffer>
    <experiments>4</experiments>
</comment>
<comment type="interaction">
    <interactant intactId="EBI-742948">
        <id>Q5JR59</id>
    </interactant>
    <interactant intactId="EBI-726510">
        <id>Q96BZ8</id>
        <label>LENG1</label>
    </interactant>
    <organismsDiffer>false</organismsDiffer>
    <experiments>3</experiments>
</comment>
<comment type="interaction">
    <interactant intactId="EBI-742948">
        <id>Q5JR59</id>
    </interactant>
    <interactant intactId="EBI-10257651">
        <id>Q7Z4I7-5</id>
        <label>LIMS2</label>
    </interactant>
    <organismsDiffer>false</organismsDiffer>
    <experiments>3</experiments>
</comment>
<comment type="interaction">
    <interactant intactId="EBI-742948">
        <id>Q5JR59</id>
    </interactant>
    <interactant intactId="EBI-739696">
        <id>P25791</id>
        <label>LMO2</label>
    </interactant>
    <organismsDiffer>false</organismsDiffer>
    <experiments>3</experiments>
</comment>
<comment type="interaction">
    <interactant intactId="EBI-742948">
        <id>Q5JR59</id>
    </interactant>
    <interactant intactId="EBI-739832">
        <id>Q8TBB1</id>
        <label>LNX1</label>
    </interactant>
    <organismsDiffer>false</organismsDiffer>
    <experiments>4</experiments>
</comment>
<comment type="interaction">
    <interactant intactId="EBI-742948">
        <id>Q5JR59</id>
    </interactant>
    <interactant intactId="EBI-2510106">
        <id>Q96L50</id>
        <label>LRR1</label>
    </interactant>
    <organismsDiffer>false</organismsDiffer>
    <experiments>3</experiments>
</comment>
<comment type="interaction">
    <interactant intactId="EBI-742948">
        <id>Q5JR59</id>
    </interactant>
    <interactant intactId="EBI-10293291">
        <id>Q96S90</id>
        <label>LYSMD1</label>
    </interactant>
    <organismsDiffer>false</organismsDiffer>
    <experiments>3</experiments>
</comment>
<comment type="interaction">
    <interactant intactId="EBI-742948">
        <id>Q5JR59</id>
    </interactant>
    <interactant intactId="EBI-10182930">
        <id>P43361</id>
        <label>MAGEA8</label>
    </interactant>
    <organismsDiffer>false</organismsDiffer>
    <experiments>3</experiments>
</comment>
<comment type="interaction">
    <interactant intactId="EBI-742948">
        <id>Q5JR59</id>
    </interactant>
    <interactant intactId="EBI-1004115">
        <id>Q15691</id>
        <label>MAPRE1</label>
    </interactant>
    <organismsDiffer>false</organismsDiffer>
    <experiments>7</experiments>
</comment>
<comment type="interaction">
    <interactant intactId="EBI-742948">
        <id>Q5JR59</id>
    </interactant>
    <interactant intactId="EBI-10250211">
        <id>Q6IPE9</id>
        <label>MARK4</label>
    </interactant>
    <organismsDiffer>false</organismsDiffer>
    <experiments>3</experiments>
</comment>
<comment type="interaction">
    <interactant intactId="EBI-742948">
        <id>Q5JR59</id>
    </interactant>
    <interactant intactId="EBI-1048159">
        <id>P55081</id>
        <label>MFAP1</label>
    </interactant>
    <organismsDiffer>false</organismsDiffer>
    <experiments>3</experiments>
</comment>
<comment type="interaction">
    <interactant intactId="EBI-742948">
        <id>Q5JR59</id>
    </interactant>
    <interactant intactId="EBI-766064">
        <id>Q9Y217</id>
        <label>MTMR6</label>
    </interactant>
    <organismsDiffer>false</organismsDiffer>
    <experiments>3</experiments>
</comment>
<comment type="interaction">
    <interactant intactId="EBI-742948">
        <id>Q5JR59</id>
    </interactant>
    <interactant intactId="EBI-928842">
        <id>Q9GZM8</id>
        <label>NDEL1</label>
    </interactant>
    <organismsDiffer>false</organismsDiffer>
    <experiments>3</experiments>
</comment>
<comment type="interaction">
    <interactant intactId="EBI-742948">
        <id>Q5JR59</id>
    </interactant>
    <interactant intactId="EBI-10249760">
        <id>Q9UHB4</id>
        <label>NDOR1</label>
    </interactant>
    <organismsDiffer>false</organismsDiffer>
    <experiments>4</experiments>
</comment>
<comment type="interaction">
    <interactant intactId="EBI-742948">
        <id>Q5JR59</id>
    </interactant>
    <interactant intactId="EBI-348444">
        <id>P18615</id>
        <label>NELFE</label>
    </interactant>
    <organismsDiffer>false</organismsDiffer>
    <experiments>3</experiments>
</comment>
<comment type="interaction">
    <interactant intactId="EBI-742948">
        <id>Q5JR59</id>
    </interactant>
    <interactant intactId="EBI-741158">
        <id>Q96HA8</id>
        <label>NTAQ1</label>
    </interactant>
    <organismsDiffer>false</organismsDiffer>
    <experiments>3</experiments>
</comment>
<comment type="interaction">
    <interactant intactId="EBI-742948">
        <id>Q5JR59</id>
    </interactant>
    <interactant intactId="EBI-726826">
        <id>Q8NFP7</id>
        <label>NUDT10</label>
    </interactant>
    <organismsDiffer>false</organismsDiffer>
    <experiments>3</experiments>
</comment>
<comment type="interaction">
    <interactant intactId="EBI-742948">
        <id>Q5JR59</id>
    </interactant>
    <interactant intactId="EBI-10234557">
        <id>Q14990</id>
        <label>ODF1</label>
    </interactant>
    <organismsDiffer>false</organismsDiffer>
    <experiments>4</experiments>
</comment>
<comment type="interaction">
    <interactant intactId="EBI-742948">
        <id>Q5JR59</id>
    </interactant>
    <interactant intactId="EBI-1105124">
        <id>Q5VU43</id>
        <label>PDE4DIP</label>
    </interactant>
    <organismsDiffer>false</organismsDiffer>
    <experiments>3</experiments>
</comment>
<comment type="interaction">
    <interactant intactId="EBI-742948">
        <id>Q5JR59</id>
    </interactant>
    <interactant intactId="EBI-714158">
        <id>Q13526</id>
        <label>PIN1</label>
    </interactant>
    <organismsDiffer>false</organismsDiffer>
    <experiments>3</experiments>
</comment>
<comment type="interaction">
    <interactant intactId="EBI-742948">
        <id>Q5JR59</id>
    </interactant>
    <interactant intactId="EBI-702235">
        <id>Q99959</id>
        <label>PKP2</label>
    </interactant>
    <organismsDiffer>false</organismsDiffer>
    <experiments>5</experiments>
</comment>
<comment type="interaction">
    <interactant intactId="EBI-742948">
        <id>Q5JR59</id>
    </interactant>
    <interactant intactId="EBI-769257">
        <id>Q9NRQ2</id>
        <label>PLSCR4</label>
    </interactant>
    <organismsDiffer>false</organismsDiffer>
    <experiments>5</experiments>
</comment>
<comment type="interaction">
    <interactant intactId="EBI-742948">
        <id>Q5JR59</id>
    </interactant>
    <interactant intactId="EBI-713000">
        <id>Q9Y2S7</id>
        <label>POLDIP2</label>
    </interactant>
    <organismsDiffer>false</organismsDiffer>
    <experiments>3</experiments>
</comment>
<comment type="interaction">
    <interactant intactId="EBI-742948">
        <id>Q5JR59</id>
    </interactant>
    <interactant intactId="EBI-10276663">
        <id>Q8WUT1</id>
        <label>POLDIP3</label>
    </interactant>
    <organismsDiffer>false</organismsDiffer>
    <experiments>3</experiments>
</comment>
<comment type="interaction">
    <interactant intactId="EBI-742948">
        <id>Q5JR59</id>
    </interactant>
    <interactant intactId="EBI-474076">
        <id>Q8NEY8</id>
        <label>PPHLN1</label>
    </interactant>
    <organismsDiffer>false</organismsDiffer>
    <experiments>3</experiments>
</comment>
<comment type="interaction">
    <interactant intactId="EBI-742948">
        <id>Q5JR59</id>
    </interactant>
    <interactant intactId="EBI-2557469">
        <id>Q6NYC8</id>
        <label>PPP1R18</label>
    </interactant>
    <organismsDiffer>false</organismsDiffer>
    <experiments>3</experiments>
</comment>
<comment type="interaction">
    <interactant intactId="EBI-742948">
        <id>Q5JR59</id>
    </interactant>
    <interactant intactId="EBI-1181405">
        <id>Q13131</id>
        <label>PRKAA1</label>
    </interactant>
    <organismsDiffer>false</organismsDiffer>
    <experiments>3</experiments>
</comment>
<comment type="interaction">
    <interactant intactId="EBI-742948">
        <id>Q5JR59</id>
    </interactant>
    <interactant intactId="EBI-1567797">
        <id>Q8WWY3</id>
        <label>PRPF31</label>
    </interactant>
    <organismsDiffer>false</organismsDiffer>
    <experiments>3</experiments>
</comment>
<comment type="interaction">
    <interactant intactId="EBI-742948">
        <id>Q5JR59</id>
    </interactant>
    <interactant intactId="EBI-359352">
        <id>P25786</id>
        <label>PSMA1</label>
    </interactant>
    <organismsDiffer>false</organismsDiffer>
    <experiments>6</experiments>
</comment>
<comment type="interaction">
    <interactant intactId="EBI-742948">
        <id>Q5JR59</id>
    </interactant>
    <interactant intactId="EBI-7199479">
        <id>Q8WUK0</id>
        <label>PTPMT1</label>
    </interactant>
    <organismsDiffer>false</organismsDiffer>
    <experiments>3</experiments>
</comment>
<comment type="interaction">
    <interactant intactId="EBI-742948">
        <id>Q5JR59</id>
    </interactant>
    <interactant intactId="EBI-743796">
        <id>Q8TBN0</id>
        <label>RAB3IL1</label>
    </interactant>
    <organismsDiffer>false</organismsDiffer>
    <experiments>3</experiments>
</comment>
<comment type="interaction">
    <interactant intactId="EBI-742948">
        <id>Q5JR59</id>
    </interactant>
    <interactant intactId="EBI-712388">
        <id>P41220</id>
        <label>RGS2</label>
    </interactant>
    <organismsDiffer>false</organismsDiffer>
    <experiments>3</experiments>
</comment>
<comment type="interaction">
    <interactant intactId="EBI-742948">
        <id>Q5JR59</id>
    </interactant>
    <interactant intactId="EBI-746325">
        <id>Q8TCX5</id>
        <label>RHPN1</label>
    </interactant>
    <organismsDiffer>false</organismsDiffer>
    <experiments>4</experiments>
</comment>
<comment type="interaction">
    <interactant intactId="EBI-742948">
        <id>Q5JR59</id>
    </interactant>
    <interactant intactId="EBI-10288358">
        <id>Q96HH0</id>
        <label>ROBO3</label>
    </interactant>
    <organismsDiffer>false</organismsDiffer>
    <experiments>3</experiments>
</comment>
<comment type="interaction">
    <interactant intactId="EBI-742948">
        <id>Q5JR59</id>
    </interactant>
    <interactant intactId="EBI-621389">
        <id>P27694</id>
        <label>RPA1</label>
    </interactant>
    <organismsDiffer>false</organismsDiffer>
    <experiments>3</experiments>
</comment>
<comment type="interaction">
    <interactant intactId="EBI-742948">
        <id>Q5JR59</id>
    </interactant>
    <interactant intactId="EBI-358122">
        <id>P32969</id>
        <label>RPL9P9</label>
    </interactant>
    <organismsDiffer>false</organismsDiffer>
    <experiments>3</experiments>
</comment>
<comment type="interaction">
    <interactant intactId="EBI-742948">
        <id>Q5JR59</id>
    </interactant>
    <interactant intactId="EBI-10217913">
        <id>Q14D33</id>
        <label>RTP5</label>
    </interactant>
    <organismsDiffer>false</organismsDiffer>
    <experiments>3</experiments>
</comment>
<comment type="interaction">
    <interactant intactId="EBI-742948">
        <id>Q5JR59</id>
    </interactant>
    <interactant intactId="EBI-7543896">
        <id>O95171</id>
        <label>SCEL</label>
    </interactant>
    <organismsDiffer>false</organismsDiffer>
    <experiments>3</experiments>
</comment>
<comment type="interaction">
    <interactant intactId="EBI-742948">
        <id>Q5JR59</id>
    </interactant>
    <interactant intactId="EBI-727004">
        <id>O00560</id>
        <label>SDCBP</label>
    </interactant>
    <organismsDiffer>false</organismsDiffer>
    <experiments>3</experiments>
</comment>
<comment type="interaction">
    <interactant intactId="EBI-742948">
        <id>Q5JR59</id>
    </interactant>
    <interactant intactId="EBI-10277687">
        <id>Q8WWX9</id>
        <label>SELENOM</label>
    </interactant>
    <organismsDiffer>false</organismsDiffer>
    <experiments>3</experiments>
</comment>
<comment type="interaction">
    <interactant intactId="EBI-742948">
        <id>Q5JR59</id>
    </interactant>
    <interactant intactId="EBI-10303449">
        <id>Q9C0A6-2</id>
        <label>SETD5</label>
    </interactant>
    <organismsDiffer>false</organismsDiffer>
    <experiments>3</experiments>
</comment>
<comment type="interaction">
    <interactant intactId="EBI-742948">
        <id>Q5JR59</id>
    </interactant>
    <interactant intactId="EBI-747035">
        <id>Q9H788</id>
        <label>SH2D4A</label>
    </interactant>
    <organismsDiffer>false</organismsDiffer>
    <experiments>3</experiments>
</comment>
<comment type="interaction">
    <interactant intactId="EBI-742948">
        <id>Q5JR59</id>
    </interactant>
    <interactant intactId="EBI-10308083">
        <id>Q9H788-2</id>
        <label>SH2D4A</label>
    </interactant>
    <organismsDiffer>false</organismsDiffer>
    <experiments>3</experiments>
</comment>
<comment type="interaction">
    <interactant intactId="EBI-742948">
        <id>Q5JR59</id>
    </interactant>
    <interactant intactId="EBI-10225873">
        <id>Q08AM8</id>
        <label>SH3RF2</label>
    </interactant>
    <organismsDiffer>false</organismsDiffer>
    <experiments>3</experiments>
</comment>
<comment type="interaction">
    <interactant intactId="EBI-742948">
        <id>Q5JR59</id>
    </interactant>
    <interactant intactId="EBI-10313866">
        <id>Q9NUL5</id>
        <label>SHFL</label>
    </interactant>
    <organismsDiffer>false</organismsDiffer>
    <experiments>3</experiments>
</comment>
<comment type="interaction">
    <interactant intactId="EBI-742948">
        <id>Q5JR59</id>
    </interactant>
    <interactant intactId="EBI-1759386">
        <id>Q9UHI7</id>
        <label>SLC23A1</label>
    </interactant>
    <organismsDiffer>false</organismsDiffer>
    <experiments>3</experiments>
</comment>
<comment type="interaction">
    <interactant intactId="EBI-742948">
        <id>Q5JR59</id>
    </interactant>
    <interactant intactId="EBI-356254">
        <id>P12236</id>
        <label>SLC25A6</label>
    </interactant>
    <organismsDiffer>false</organismsDiffer>
    <experiments>4</experiments>
</comment>
<comment type="interaction">
    <interactant intactId="EBI-742948">
        <id>Q5JR59</id>
    </interactant>
    <interactant intactId="EBI-1050793">
        <id>Q9GZT3</id>
        <label>SLIRP</label>
    </interactant>
    <organismsDiffer>false</organismsDiffer>
    <experiments>3</experiments>
</comment>
<comment type="interaction">
    <interactant intactId="EBI-742948">
        <id>Q5JR59</id>
    </interactant>
    <interactant intactId="EBI-455078">
        <id>Q969G3</id>
        <label>SMARCE1</label>
    </interactant>
    <organismsDiffer>false</organismsDiffer>
    <experiments>3</experiments>
</comment>
<comment type="interaction">
    <interactant intactId="EBI-742948">
        <id>Q5JR59</id>
    </interactant>
    <interactant intactId="EBI-1045459">
        <id>O95863</id>
        <label>SNAI1</label>
    </interactant>
    <organismsDiffer>false</organismsDiffer>
    <experiments>3</experiments>
</comment>
<comment type="interaction">
    <interactant intactId="EBI-742948">
        <id>Q5JR59</id>
    </interactant>
    <interactant intactId="EBI-607085">
        <id>P09012</id>
        <label>SNRPA</label>
    </interactant>
    <organismsDiffer>false</organismsDiffer>
    <experiments>3</experiments>
</comment>
<comment type="interaction">
    <interactant intactId="EBI-742948">
        <id>Q5JR59</id>
    </interactant>
    <interactant intactId="EBI-1053651">
        <id>P08579</id>
        <label>SNRPB2</label>
    </interactant>
    <organismsDiffer>false</organismsDiffer>
    <experiments>3</experiments>
</comment>
<comment type="interaction">
    <interactant intactId="EBI-742948">
        <id>Q5JR59</id>
    </interactant>
    <interactant intactId="EBI-632715">
        <id>Q13573</id>
        <label>SNW1</label>
    </interactant>
    <organismsDiffer>false</organismsDiffer>
    <experiments>3</experiments>
</comment>
<comment type="interaction">
    <interactant intactId="EBI-742948">
        <id>Q5JR59</id>
    </interactant>
    <interactant intactId="EBI-8635958">
        <id>Q6RVD6</id>
        <label>SPATA8</label>
    </interactant>
    <organismsDiffer>false</organismsDiffer>
    <experiments>3</experiments>
</comment>
<comment type="interaction">
    <interactant intactId="EBI-742948">
        <id>Q5JR59</id>
    </interactant>
    <interactant intactId="EBI-717201">
        <id>Q9UQ90</id>
        <label>SPG7</label>
    </interactant>
    <organismsDiffer>false</organismsDiffer>
    <experiments>4</experiments>
</comment>
<comment type="interaction">
    <interactant intactId="EBI-742948">
        <id>Q5JR59</id>
    </interactant>
    <interactant intactId="EBI-749295">
        <id>O75716</id>
        <label>STK16</label>
    </interactant>
    <organismsDiffer>false</organismsDiffer>
    <experiments>3</experiments>
</comment>
<comment type="interaction">
    <interactant intactId="EBI-742948">
        <id>Q5JR59</id>
    </interactant>
    <interactant intactId="EBI-10246152">
        <id>Q5T7P8-2</id>
        <label>SYT6</label>
    </interactant>
    <organismsDiffer>false</organismsDiffer>
    <experiments>3</experiments>
</comment>
<comment type="interaction">
    <interactant intactId="EBI-742948">
        <id>Q5JR59</id>
    </interactant>
    <interactant intactId="EBI-1026992">
        <id>Q15543</id>
        <label>TAF13</label>
    </interactant>
    <organismsDiffer>false</organismsDiffer>
    <experiments>3</experiments>
</comment>
<comment type="interaction">
    <interactant intactId="EBI-742948">
        <id>Q5JR59</id>
    </interactant>
    <interactant intactId="EBI-741350">
        <id>Q9BT49</id>
        <label>THAP7</label>
    </interactant>
    <organismsDiffer>false</organismsDiffer>
    <experiments>3</experiments>
</comment>
<comment type="interaction">
    <interactant intactId="EBI-742948">
        <id>Q5JR59</id>
    </interactant>
    <interactant intactId="EBI-717810">
        <id>Q08117</id>
        <label>TLE5</label>
    </interactant>
    <organismsDiffer>false</organismsDiffer>
    <experiments>3</experiments>
</comment>
<comment type="interaction">
    <interactant intactId="EBI-742948">
        <id>Q5JR59</id>
    </interactant>
    <interactant intactId="EBI-739588">
        <id>Q96S44</id>
        <label>TP53RK</label>
    </interactant>
    <organismsDiffer>false</organismsDiffer>
    <experiments>3</experiments>
</comment>
<comment type="interaction">
    <interactant intactId="EBI-742948">
        <id>Q5JR59</id>
    </interactant>
    <interactant intactId="EBI-5235829">
        <id>Q8IWZ5</id>
        <label>TRIM42</label>
    </interactant>
    <organismsDiffer>false</organismsDiffer>
    <experiments>3</experiments>
</comment>
<comment type="interaction">
    <interactant intactId="EBI-742948">
        <id>Q5JR59</id>
    </interactant>
    <interactant intactId="EBI-10241197">
        <id>Q3SY00</id>
        <label>TSGA10IP</label>
    </interactant>
    <organismsDiffer>false</organismsDiffer>
    <experiments>4</experiments>
</comment>
<comment type="interaction">
    <interactant intactId="EBI-742948">
        <id>Q5JR59</id>
    </interactant>
    <interactant intactId="EBI-9053916">
        <id>Q63HK5</id>
        <label>TSHZ3</label>
    </interactant>
    <organismsDiffer>false</organismsDiffer>
    <experiments>3</experiments>
</comment>
<comment type="interaction">
    <interactant intactId="EBI-742948">
        <id>Q5JR59</id>
    </interactant>
    <interactant intactId="EBI-2932492">
        <id>Q99757</id>
        <label>TXN2</label>
    </interactant>
    <organismsDiffer>false</organismsDiffer>
    <experiments>3</experiments>
</comment>
<comment type="interaction">
    <interactant intactId="EBI-742948">
        <id>Q5JR59</id>
    </interactant>
    <interactant intactId="EBI-743272">
        <id>O75604</id>
        <label>USP2</label>
    </interactant>
    <organismsDiffer>false</organismsDiffer>
    <experiments>3</experiments>
</comment>
<comment type="interaction">
    <interactant intactId="EBI-742948">
        <id>Q5JR59</id>
    </interactant>
    <interactant intactId="EBI-749118">
        <id>Q9BTA9</id>
        <label>WAC</label>
    </interactant>
    <organismsDiffer>false</organismsDiffer>
    <experiments>3</experiments>
</comment>
<comment type="interaction">
    <interactant intactId="EBI-742948">
        <id>Q5JR59</id>
    </interactant>
    <interactant intactId="EBI-10298216">
        <id>Q9BTA9-2</id>
        <label>WAC</label>
    </interactant>
    <organismsDiffer>false</organismsDiffer>
    <experiments>3</experiments>
</comment>
<comment type="interaction">
    <interactant intactId="EBI-742948">
        <id>Q5JR59</id>
    </interactant>
    <interactant intactId="EBI-740767">
        <id>Q53FD0</id>
        <label>ZC2HC1C</label>
    </interactant>
    <organismsDiffer>false</organismsDiffer>
    <experiments>4</experiments>
</comment>
<comment type="interaction">
    <interactant intactId="EBI-742948">
        <id>Q5JR59</id>
    </interactant>
    <interactant intactId="EBI-6448783">
        <id>G3V1X1</id>
        <label>ZFC3H1</label>
    </interactant>
    <organismsDiffer>false</organismsDiffer>
    <experiments>3</experiments>
</comment>
<comment type="interaction">
    <interactant intactId="EBI-742948">
        <id>Q5JR59</id>
    </interactant>
    <interactant intactId="EBI-7236323">
        <id>Q6ZN57</id>
        <label>ZFP2</label>
    </interactant>
    <organismsDiffer>false</organismsDiffer>
    <experiments>3</experiments>
</comment>
<comment type="interaction">
    <interactant intactId="EBI-742948">
        <id>Q5JR59</id>
    </interactant>
    <interactant intactId="EBI-2849569">
        <id>Q9BQ24</id>
        <label>ZFYVE21</label>
    </interactant>
    <organismsDiffer>false</organismsDiffer>
    <experiments>3</experiments>
</comment>
<comment type="interaction">
    <interactant intactId="EBI-742948">
        <id>Q5JR59</id>
    </interactant>
    <interactant intactId="EBI-2682299">
        <id>Q96NC0</id>
        <label>ZMAT2</label>
    </interactant>
    <organismsDiffer>false</organismsDiffer>
    <experiments>3</experiments>
</comment>
<comment type="interaction">
    <interactant intactId="EBI-742948">
        <id>Q5JR59</id>
    </interactant>
    <interactant intactId="EBI-749129">
        <id>P52737</id>
        <label>ZNF136</label>
    </interactant>
    <organismsDiffer>false</organismsDiffer>
    <experiments>4</experiments>
</comment>
<comment type="interaction">
    <interactant intactId="EBI-742948">
        <id>Q5JR59</id>
    </interactant>
    <interactant intactId="EBI-717634">
        <id>P17024</id>
        <label>ZNF20</label>
    </interactant>
    <organismsDiffer>false</organismsDiffer>
    <experiments>3</experiments>
</comment>
<comment type="interaction">
    <interactant intactId="EBI-742948">
        <id>Q5JR59</id>
    </interactant>
    <interactant intactId="EBI-749023">
        <id>Q9UNY5</id>
        <label>ZNF232</label>
    </interactant>
    <organismsDiffer>false</organismsDiffer>
    <experiments>3</experiments>
</comment>
<comment type="interaction">
    <interactant intactId="EBI-742948">
        <id>Q5JR59</id>
    </interactant>
    <interactant intactId="EBI-10177272">
        <id>P15622-3</id>
        <label>ZNF250</label>
    </interactant>
    <organismsDiffer>false</organismsDiffer>
    <experiments>3</experiments>
</comment>
<comment type="interaction">
    <interactant intactId="EBI-742948">
        <id>Q5JR59</id>
    </interactant>
    <interactant intactId="EBI-1640965">
        <id>P17036</id>
        <label>ZNF3</label>
    </interactant>
    <organismsDiffer>false</organismsDiffer>
    <experiments>3</experiments>
</comment>
<comment type="interaction">
    <interactant intactId="EBI-742948">
        <id>Q5JR59</id>
    </interactant>
    <interactant intactId="EBI-10258769">
        <id>Q86U76</id>
        <label>ZNF3</label>
    </interactant>
    <organismsDiffer>false</organismsDiffer>
    <experiments>3</experiments>
</comment>
<comment type="interaction">
    <interactant intactId="EBI-742948">
        <id>Q5JR59</id>
    </interactant>
    <interactant intactId="EBI-7233259">
        <id>Q86UD4</id>
        <label>ZNF329</label>
    </interactant>
    <organismsDiffer>false</organismsDiffer>
    <experiments>3</experiments>
</comment>
<comment type="interaction">
    <interactant intactId="EBI-742948">
        <id>Q5JR59</id>
    </interactant>
    <interactant intactId="EBI-714987">
        <id>Q9Y3M9</id>
        <label>ZNF337</label>
    </interactant>
    <organismsDiffer>false</organismsDiffer>
    <experiments>3</experiments>
</comment>
<comment type="interaction">
    <interactant intactId="EBI-742948">
        <id>Q5JR59</id>
    </interactant>
    <interactant intactId="EBI-720304">
        <id>Q86VK4</id>
        <label>ZNF410</label>
    </interactant>
    <organismsDiffer>false</organismsDiffer>
    <experiments>3</experiments>
</comment>
<comment type="interaction">
    <interactant intactId="EBI-742948">
        <id>Q5JR59</id>
    </interactant>
    <interactant intactId="EBI-10226171">
        <id>Q09FC8</id>
        <label>ZNF415</label>
    </interactant>
    <organismsDiffer>false</organismsDiffer>
    <experiments>3</experiments>
</comment>
<comment type="interaction">
    <interactant intactId="EBI-742948">
        <id>Q5JR59</id>
    </interactant>
    <interactant intactId="EBI-740727">
        <id>Q8TAU3</id>
        <label>ZNF417</label>
    </interactant>
    <organismsDiffer>false</organismsDiffer>
    <experiments>3</experiments>
</comment>
<comment type="interaction">
    <interactant intactId="EBI-742948">
        <id>Q5JR59</id>
    </interactant>
    <interactant intactId="EBI-743265">
        <id>Q9BUY5</id>
        <label>ZNF426</label>
    </interactant>
    <organismsDiffer>false</organismsDiffer>
    <experiments>3</experiments>
</comment>
<comment type="interaction">
    <interactant intactId="EBI-742948">
        <id>Q5JR59</id>
    </interactant>
    <interactant intactId="EBI-747580">
        <id>Q8NDP4</id>
        <label>ZNF439</label>
    </interactant>
    <organismsDiffer>false</organismsDiffer>
    <experiments>4</experiments>
</comment>
<comment type="interaction">
    <interactant intactId="EBI-742948">
        <id>Q5JR59</id>
    </interactant>
    <interactant intactId="EBI-726439">
        <id>Q8IYI8</id>
        <label>ZNF440</label>
    </interactant>
    <organismsDiffer>false</organismsDiffer>
    <experiments>3</experiments>
</comment>
<comment type="interaction">
    <interactant intactId="EBI-742948">
        <id>Q5JR59</id>
    </interactant>
    <interactant intactId="EBI-1105370">
        <id>Q9ULM2</id>
        <label>ZNF490</label>
    </interactant>
    <organismsDiffer>false</organismsDiffer>
    <experiments>5</experiments>
</comment>
<comment type="interaction">
    <interactant intactId="EBI-742948">
        <id>Q5JR59</id>
    </interactant>
    <interactant intactId="EBI-10172590">
        <id>Q7Z3I7</id>
        <label>ZNF572</label>
    </interactant>
    <organismsDiffer>false</organismsDiffer>
    <experiments>6</experiments>
</comment>
<comment type="interaction">
    <interactant intactId="EBI-742948">
        <id>Q5JR59</id>
    </interactant>
    <interactant intactId="EBI-745520">
        <id>Q9P0T4</id>
        <label>ZNF581</label>
    </interactant>
    <organismsDiffer>false</organismsDiffer>
    <experiments>4</experiments>
</comment>
<comment type="interaction">
    <interactant intactId="EBI-742948">
        <id>Q5JR59</id>
    </interactant>
    <interactant intactId="EBI-6427977">
        <id>Q96SQ5</id>
        <label>ZNF587</label>
    </interactant>
    <organismsDiffer>false</organismsDiffer>
    <experiments>3</experiments>
</comment>
<comment type="interaction">
    <interactant intactId="EBI-742948">
        <id>Q5JR59</id>
    </interactant>
    <interactant intactId="EBI-8653994">
        <id>Q96NL3</id>
        <label>ZNF599</label>
    </interactant>
    <organismsDiffer>false</organismsDiffer>
    <experiments>3</experiments>
</comment>
<comment type="interaction">
    <interactant intactId="EBI-742948">
        <id>Q5JR59</id>
    </interactant>
    <interactant intactId="EBI-747175">
        <id>Q96SK3</id>
        <label>ZNF607</label>
    </interactant>
    <organismsDiffer>false</organismsDiffer>
    <experiments>3</experiments>
</comment>
<comment type="interaction">
    <interactant intactId="EBI-742948">
        <id>Q5JR59</id>
    </interactant>
    <interactant intactId="EBI-9116427">
        <id>Q9P2J8</id>
        <label>ZNF624</label>
    </interactant>
    <organismsDiffer>false</organismsDiffer>
    <experiments>3</experiments>
</comment>
<comment type="interaction">
    <interactant intactId="EBI-742948">
        <id>Q5JR59</id>
    </interactant>
    <interactant intactId="EBI-745276">
        <id>Q9BS34</id>
        <label>ZNF670</label>
    </interactant>
    <organismsDiffer>false</organismsDiffer>
    <experiments>3</experiments>
</comment>
<comment type="interaction">
    <interactant intactId="EBI-742948">
        <id>Q5JR59</id>
    </interactant>
    <interactant intactId="EBI-3925400">
        <id>A8K8V0</id>
        <label>ZNF785</label>
    </interactant>
    <organismsDiffer>false</organismsDiffer>
    <experiments>4</experiments>
</comment>
<comment type="interaction">
    <interactant intactId="EBI-742948">
        <id>Q5JR59</id>
    </interactant>
    <interactant intactId="EBI-10225757">
        <id>Q08AG5</id>
        <label>ZNF844</label>
    </interactant>
    <organismsDiffer>false</organismsDiffer>
    <experiments>3</experiments>
</comment>
<comment type="interaction">
    <interactant intactId="EBI-742948">
        <id>Q5JR59</id>
    </interactant>
    <interactant intactId="EBI-1210440">
        <id>O43309</id>
        <label>ZSCAN12</label>
    </interactant>
    <organismsDiffer>false</organismsDiffer>
    <experiments>3</experiments>
</comment>
<comment type="interaction">
    <interactant intactId="EBI-742948">
        <id>Q5JR59</id>
    </interactant>
    <interactant intactId="EBI-3920053">
        <id>Q16670</id>
        <label>ZSCAN26</label>
    </interactant>
    <organismsDiffer>false</organismsDiffer>
    <experiments>3</experiments>
</comment>
<comment type="interaction">
    <interactant intactId="EBI-742948">
        <id>Q5JR59</id>
    </interactant>
    <interactant intactId="EBI-10174635">
        <id>A8K8Y5</id>
    </interactant>
    <organismsDiffer>false</organismsDiffer>
    <experiments>3</experiments>
</comment>
<comment type="interaction">
    <interactant intactId="EBI-742948">
        <id>Q5JR59</id>
    </interactant>
    <interactant intactId="EBI-10255586">
        <id>Q6ZVW3</id>
    </interactant>
    <organismsDiffer>false</organismsDiffer>
    <experiments>3</experiments>
</comment>
<comment type="interaction">
    <interactant intactId="EBI-742948">
        <id>Q5JR59</id>
    </interactant>
    <interactant intactId="EBI-10307481">
        <id>Q9H6F0</id>
    </interactant>
    <organismsDiffer>false</organismsDiffer>
    <experiments>3</experiments>
</comment>
<comment type="interaction">
    <interactant intactId="EBI-742948">
        <id>Q5JR59</id>
    </interactant>
    <interactant intactId="EBI-25475920">
        <id>PRO_0000449631</id>
        <label>rep</label>
        <dbReference type="UniProtKB" id="P0DTD1"/>
    </interactant>
    <organismsDiffer>true</organismsDiffer>
    <experiments>3</experiments>
</comment>
<comment type="interaction">
    <interactant intactId="EBI-742948">
        <id>Q5JR59</id>
    </interactant>
    <interactant intactId="EBI-25492395">
        <id>PRO_0000449633</id>
        <label>rep</label>
        <dbReference type="UniProtKB" id="P0DTD1"/>
    </interactant>
    <organismsDiffer>true</organismsDiffer>
    <experiments>3</experiments>
</comment>
<comment type="interaction">
    <interactant intactId="EBI-11522433">
        <id>Q5JR59-3</id>
    </interactant>
    <interactant intactId="EBI-2824666">
        <id>Q6UXT9</id>
        <label>ABHD15</label>
    </interactant>
    <organismsDiffer>false</organismsDiffer>
    <experiments>3</experiments>
</comment>
<comment type="interaction">
    <interactant intactId="EBI-11522433">
        <id>Q5JR59-3</id>
    </interactant>
    <interactant intactId="EBI-2818055">
        <id>Q08AH1</id>
        <label>ACSM1</label>
    </interactant>
    <organismsDiffer>false</organismsDiffer>
    <experiments>3</experiments>
</comment>
<comment type="interaction">
    <interactant intactId="EBI-11522433">
        <id>Q5JR59-3</id>
    </interactant>
    <interactant intactId="EBI-16430470">
        <id>A0A0S2Z3D6</id>
        <label>AKT1</label>
    </interactant>
    <organismsDiffer>false</organismsDiffer>
    <experiments>3</experiments>
</comment>
<comment type="interaction">
    <interactant intactId="EBI-11522433">
        <id>Q5JR59-3</id>
    </interactant>
    <interactant intactId="EBI-17183751">
        <id>X5D778</id>
        <label>ANKRD11</label>
    </interactant>
    <organismsDiffer>false</organismsDiffer>
    <experiments>3</experiments>
</comment>
<comment type="interaction">
    <interactant intactId="EBI-11522433">
        <id>Q5JR59-3</id>
    </interactant>
    <interactant intactId="EBI-11954519">
        <id>Q49AR9</id>
        <label>ANKS1A</label>
    </interactant>
    <organismsDiffer>false</organismsDiffer>
    <experiments>3</experiments>
</comment>
<comment type="interaction">
    <interactant intactId="EBI-11522433">
        <id>Q5JR59-3</id>
    </interactant>
    <interactant intactId="EBI-745213">
        <id>P29972</id>
        <label>AQP1</label>
    </interactant>
    <organismsDiffer>false</organismsDiffer>
    <experiments>3</experiments>
</comment>
<comment type="interaction">
    <interactant intactId="EBI-11522433">
        <id>Q5JR59-3</id>
    </interactant>
    <interactant intactId="EBI-2875746">
        <id>P40617</id>
        <label>ARL4A</label>
    </interactant>
    <organismsDiffer>false</organismsDiffer>
    <experiments>3</experiments>
</comment>
<comment type="interaction">
    <interactant intactId="EBI-11522433">
        <id>Q5JR59-3</id>
    </interactant>
    <interactant intactId="EBI-16429430">
        <id>A0A0S2Z4M1</id>
        <label>AXIN1</label>
    </interactant>
    <organismsDiffer>false</organismsDiffer>
    <experiments>3</experiments>
</comment>
<comment type="interaction">
    <interactant intactId="EBI-11522433">
        <id>Q5JR59-3</id>
    </interactant>
    <interactant intactId="EBI-710484">
        <id>O15169</id>
        <label>AXIN1</label>
    </interactant>
    <organismsDiffer>false</organismsDiffer>
    <experiments>3</experiments>
</comment>
<comment type="interaction">
    <interactant intactId="EBI-11522433">
        <id>Q5JR59-3</id>
    </interactant>
    <interactant intactId="EBI-11977289">
        <id>Q9H503-2</id>
        <label>BANF2</label>
    </interactant>
    <organismsDiffer>false</organismsDiffer>
    <experiments>3</experiments>
</comment>
<comment type="interaction">
    <interactant intactId="EBI-11522433">
        <id>Q5JR59-3</id>
    </interactant>
    <interactant intactId="EBI-473181">
        <id>Q99728</id>
        <label>BARD1</label>
    </interactant>
    <organismsDiffer>false</organismsDiffer>
    <experiments>3</experiments>
</comment>
<comment type="interaction">
    <interactant intactId="EBI-11522433">
        <id>Q5JR59-3</id>
    </interactant>
    <interactant intactId="EBI-745073">
        <id>Q9BXY8</id>
        <label>BEX2</label>
    </interactant>
    <organismsDiffer>false</organismsDiffer>
    <experiments>3</experiments>
</comment>
<comment type="interaction">
    <interactant intactId="EBI-11522433">
        <id>Q5JR59-3</id>
    </interactant>
    <interactant intactId="EBI-358049">
        <id>Q13895</id>
        <label>BYSL</label>
    </interactant>
    <organismsDiffer>false</organismsDiffer>
    <experiments>3</experiments>
</comment>
<comment type="interaction">
    <interactant intactId="EBI-11522433">
        <id>Q5JR59-3</id>
    </interactant>
    <interactant intactId="EBI-12061599">
        <id>Q9H6X5-2</id>
        <label>C19orf44</label>
    </interactant>
    <organismsDiffer>false</organismsDiffer>
    <experiments>3</experiments>
</comment>
<comment type="interaction">
    <interactant intactId="EBI-11522433">
        <id>Q5JR59-3</id>
    </interactant>
    <interactant intactId="EBI-747505">
        <id>Q8TAB5</id>
        <label>C1orf216</label>
    </interactant>
    <organismsDiffer>false</organismsDiffer>
    <experiments>3</experiments>
</comment>
<comment type="interaction">
    <interactant intactId="EBI-11522433">
        <id>Q5JR59-3</id>
    </interactant>
    <interactant intactId="EBI-10226774">
        <id>Q0VAL7</id>
        <label>C21orf58</label>
    </interactant>
    <organismsDiffer>false</organismsDiffer>
    <experiments>3</experiments>
</comment>
<comment type="interaction">
    <interactant intactId="EBI-11522433">
        <id>Q5JR59-3</id>
    </interactant>
    <interactant intactId="EBI-1184651">
        <id>P54284</id>
        <label>CACNB3</label>
    </interactant>
    <organismsDiffer>false</organismsDiffer>
    <experiments>3</experiments>
</comment>
<comment type="interaction">
    <interactant intactId="EBI-11522433">
        <id>Q5JR59-3</id>
    </interactant>
    <interactant intactId="EBI-712912">
        <id>Q9HC52</id>
        <label>CBX8</label>
    </interactant>
    <organismsDiffer>false</organismsDiffer>
    <experiments>3</experiments>
</comment>
<comment type="interaction">
    <interactant intactId="EBI-11522433">
        <id>Q5JR59-3</id>
    </interactant>
    <interactant intactId="EBI-356265">
        <id>Q8IX12</id>
        <label>CCAR1</label>
    </interactant>
    <organismsDiffer>false</organismsDiffer>
    <experiments>3</experiments>
</comment>
<comment type="interaction">
    <interactant intactId="EBI-11522433">
        <id>Q5JR59-3</id>
    </interactant>
    <interactant intactId="EBI-744311">
        <id>Q8IYX3</id>
        <label>CCDC116</label>
    </interactant>
    <organismsDiffer>false</organismsDiffer>
    <experiments>3</experiments>
</comment>
<comment type="interaction">
    <interactant intactId="EBI-11522433">
        <id>Q5JR59-3</id>
    </interactant>
    <interactant intactId="EBI-744556">
        <id>Q96HB5</id>
        <label>CCDC120</label>
    </interactant>
    <organismsDiffer>false</organismsDiffer>
    <experiments>3</experiments>
</comment>
<comment type="interaction">
    <interactant intactId="EBI-11522433">
        <id>Q5JR59-3</id>
    </interactant>
    <interactant intactId="EBI-10749669">
        <id>Q8IYE0</id>
        <label>CCDC146</label>
    </interactant>
    <organismsDiffer>false</organismsDiffer>
    <experiments>3</experiments>
</comment>
<comment type="interaction">
    <interactant intactId="EBI-11522433">
        <id>Q5JR59-3</id>
    </interactant>
    <interactant intactId="EBI-740814">
        <id>Q8N715</id>
        <label>CCDC185</label>
    </interactant>
    <organismsDiffer>false</organismsDiffer>
    <experiments>3</experiments>
</comment>
<comment type="interaction">
    <interactant intactId="EBI-11522433">
        <id>Q5JR59-3</id>
    </interactant>
    <interactant intactId="EBI-11748295">
        <id>E9PSE9</id>
        <label>CCDC198</label>
    </interactant>
    <organismsDiffer>false</organismsDiffer>
    <experiments>3</experiments>
</comment>
<comment type="interaction">
    <interactant intactId="EBI-11522433">
        <id>Q5JR59-3</id>
    </interactant>
    <interactant intactId="EBI-1045350">
        <id>Q16204</id>
        <label>CCDC6</label>
    </interactant>
    <organismsDiffer>false</organismsDiffer>
    <experiments>4</experiments>
</comment>
<comment type="interaction">
    <interactant intactId="EBI-11522433">
        <id>Q5JR59-3</id>
    </interactant>
    <interactant intactId="EBI-10175300">
        <id>Q8TD31-3</id>
        <label>CCHCR1</label>
    </interactant>
    <organismsDiffer>false</organismsDiffer>
    <experiments>3</experiments>
</comment>
<comment type="interaction">
    <interactant intactId="EBI-11522433">
        <id>Q5JR59-3</id>
    </interactant>
    <interactant intactId="EBI-374880">
        <id>Q99459</id>
        <label>CDC5L</label>
    </interactant>
    <organismsDiffer>false</organismsDiffer>
    <experiments>3</experiments>
</comment>
<comment type="interaction">
    <interactant intactId="EBI-11522433">
        <id>Q5JR59-3</id>
    </interactant>
    <interactant intactId="EBI-374980">
        <id>O00311</id>
        <label>CDC7</label>
    </interactant>
    <organismsDiffer>false</organismsDiffer>
    <experiments>3</experiments>
</comment>
<comment type="interaction">
    <interactant intactId="EBI-11522433">
        <id>Q5JR59-3</id>
    </interactant>
    <interactant intactId="EBI-930143">
        <id>Q6P1J9</id>
        <label>CDC73</label>
    </interactant>
    <organismsDiffer>false</organismsDiffer>
    <experiments>6</experiments>
</comment>
<comment type="interaction">
    <interactant intactId="EBI-11522433">
        <id>Q5JR59-3</id>
    </interactant>
    <interactant intactId="EBI-746238">
        <id>Q07002</id>
        <label>CDK18</label>
    </interactant>
    <organismsDiffer>false</organismsDiffer>
    <experiments>3</experiments>
</comment>
<comment type="interaction">
    <interactant intactId="EBI-11522433">
        <id>Q5JR59-3</id>
    </interactant>
    <interactant intactId="EBI-3919850">
        <id>Q8IVW4</id>
        <label>CDKL3</label>
    </interactant>
    <organismsDiffer>false</organismsDiffer>
    <experiments>4</experiments>
</comment>
<comment type="interaction">
    <interactant intactId="EBI-11522433">
        <id>Q5JR59-3</id>
    </interactant>
    <interactant intactId="EBI-375077">
        <id>P38936</id>
        <label>CDKN1A</label>
    </interactant>
    <organismsDiffer>false</organismsDiffer>
    <experiments>3</experiments>
</comment>
<comment type="interaction">
    <interactant intactId="EBI-11522433">
        <id>Q5JR59-3</id>
    </interactant>
    <interactant intactId="EBI-519280">
        <id>P46527</id>
        <label>CDKN1B</label>
    </interactant>
    <organismsDiffer>false</organismsDiffer>
    <experiments>3</experiments>
</comment>
<comment type="interaction">
    <interactant intactId="EBI-11522433">
        <id>Q5JR59-3</id>
    </interactant>
    <interactant intactId="EBI-372775">
        <id>Q96GE4</id>
        <label>CEP95</label>
    </interactant>
    <organismsDiffer>false</organismsDiffer>
    <experiments>4</experiments>
</comment>
<comment type="interaction">
    <interactant intactId="EBI-11522433">
        <id>Q5JR59-3</id>
    </interactant>
    <interactant intactId="EBI-741528">
        <id>Q9UKJ5</id>
        <label>CHIC2</label>
    </interactant>
    <organismsDiffer>false</organismsDiffer>
    <experiments>3</experiments>
</comment>
<comment type="interaction">
    <interactant intactId="EBI-11522433">
        <id>Q5JR59-3</id>
    </interactant>
    <interactant intactId="EBI-741032">
        <id>Q8NE01</id>
        <label>CNNM3</label>
    </interactant>
    <organismsDiffer>false</organismsDiffer>
    <experiments>3</experiments>
</comment>
<comment type="interaction">
    <interactant intactId="EBI-11522433">
        <id>Q5JR59-3</id>
    </interactant>
    <interactant intactId="EBI-389449">
        <id>Q14746</id>
        <label>COG2</label>
    </interactant>
    <organismsDiffer>false</organismsDiffer>
    <experiments>4</experiments>
</comment>
<comment type="interaction">
    <interactant intactId="EBI-11522433">
        <id>Q5JR59-3</id>
    </interactant>
    <interactant intactId="EBI-2212355">
        <id>Q49AN0</id>
        <label>CRY2</label>
    </interactant>
    <organismsDiffer>false</organismsDiffer>
    <experiments>5</experiments>
</comment>
<comment type="interaction">
    <interactant intactId="EBI-11522433">
        <id>Q5JR59-3</id>
    </interactant>
    <interactant intactId="EBI-2872294">
        <id>P09603</id>
        <label>CSF1</label>
    </interactant>
    <organismsDiffer>false</organismsDiffer>
    <experiments>3</experiments>
</comment>
<comment type="interaction">
    <interactant intactId="EBI-11522433">
        <id>Q5JR59-3</id>
    </interactant>
    <interactant intactId="EBI-5453285">
        <id>Q2TBE0</id>
        <label>CWF19L2</label>
    </interactant>
    <organismsDiffer>false</organismsDiffer>
    <experiments>3</experiments>
</comment>
<comment type="interaction">
    <interactant intactId="EBI-11522433">
        <id>Q5JR59-3</id>
    </interactant>
    <interactant intactId="EBI-3843579">
        <id>Q9NS75</id>
        <label>CYSLTR2</label>
    </interactant>
    <organismsDiffer>false</organismsDiffer>
    <experiments>3</experiments>
</comment>
<comment type="interaction">
    <interactant intactId="EBI-11522433">
        <id>Q5JR59-3</id>
    </interactant>
    <interactant intactId="EBI-14148644">
        <id>O43602-2</id>
        <label>DCX</label>
    </interactant>
    <organismsDiffer>false</organismsDiffer>
    <experiments>4</experiments>
</comment>
<comment type="interaction">
    <interactant intactId="EBI-11522433">
        <id>Q5JR59-3</id>
    </interactant>
    <interactant intactId="EBI-351257">
        <id>P26196</id>
        <label>DDX6</label>
    </interactant>
    <organismsDiffer>false</organismsDiffer>
    <experiments>4</experiments>
</comment>
<comment type="interaction">
    <interactant intactId="EBI-11522433">
        <id>Q5JR59-3</id>
    </interactant>
    <interactant intactId="EBI-746300">
        <id>Q96LJ7</id>
        <label>DHRS1</label>
    </interactant>
    <organismsDiffer>false</organismsDiffer>
    <experiments>3</experiments>
</comment>
<comment type="interaction">
    <interactant intactId="EBI-11522433">
        <id>Q5JR59-3</id>
    </interactant>
    <interactant intactId="EBI-12000556">
        <id>Q9Y2H0-1</id>
        <label>DLGAP4</label>
    </interactant>
    <organismsDiffer>false</organismsDiffer>
    <experiments>3</experiments>
</comment>
<comment type="interaction">
    <interactant intactId="EBI-11522433">
        <id>Q5JR59-3</id>
    </interactant>
    <interactant intactId="EBI-9679045">
        <id>Q9NQL9</id>
        <label>DMRT3</label>
    </interactant>
    <organismsDiffer>false</organismsDiffer>
    <experiments>3</experiments>
</comment>
<comment type="interaction">
    <interactant intactId="EBI-11522433">
        <id>Q5JR59-3</id>
    </interactant>
    <interactant intactId="EBI-448771">
        <id>Q92608</id>
        <label>DOCK2</label>
    </interactant>
    <organismsDiffer>false</organismsDiffer>
    <experiments>3</experiments>
</comment>
<comment type="interaction">
    <interactant intactId="EBI-11522433">
        <id>Q5JR59-3</id>
    </interactant>
    <interactant intactId="EBI-11984733">
        <id>O60941-5</id>
        <label>DTNB</label>
    </interactant>
    <organismsDiffer>false</organismsDiffer>
    <experiments>3</experiments>
</comment>
<comment type="interaction">
    <interactant intactId="EBI-11522433">
        <id>Q5JR59-3</id>
    </interactant>
    <interactant intactId="EBI-2339219">
        <id>Q08426</id>
        <label>EHHADH</label>
    </interactant>
    <organismsDiffer>false</organismsDiffer>
    <experiments>3</experiments>
</comment>
<comment type="interaction">
    <interactant intactId="EBI-11522433">
        <id>Q5JR59-3</id>
    </interactant>
    <interactant intactId="EBI-353818">
        <id>O15371</id>
        <label>EIF3D</label>
    </interactant>
    <organismsDiffer>false</organismsDiffer>
    <experiments>3</experiments>
</comment>
<comment type="interaction">
    <interactant intactId="EBI-11522433">
        <id>Q5JR59-3</id>
    </interactant>
    <interactant intactId="EBI-744099">
        <id>Q9H0I2</id>
        <label>ENKD1</label>
    </interactant>
    <organismsDiffer>false</organismsDiffer>
    <experiments>3</experiments>
</comment>
<comment type="interaction">
    <interactant intactId="EBI-11522433">
        <id>Q5JR59-3</id>
    </interactant>
    <interactant intactId="EBI-12047821">
        <id>Q6UWV6</id>
        <label>ENPP7</label>
    </interactant>
    <organismsDiffer>false</organismsDiffer>
    <experiments>3</experiments>
</comment>
<comment type="interaction">
    <interactant intactId="EBI-11522433">
        <id>Q5JR59-3</id>
    </interactant>
    <interactant intactId="EBI-742102">
        <id>Q8IYI6</id>
        <label>EXOC8</label>
    </interactant>
    <organismsDiffer>false</organismsDiffer>
    <experiments>3</experiments>
</comment>
<comment type="interaction">
    <interactant intactId="EBI-11522433">
        <id>Q5JR59-3</id>
    </interactant>
    <interactant intactId="EBI-11977223">
        <id>O95990-4</id>
        <label>FAM107A</label>
    </interactant>
    <organismsDiffer>false</organismsDiffer>
    <experiments>3</experiments>
</comment>
<comment type="interaction">
    <interactant intactId="EBI-11522433">
        <id>Q5JR59-3</id>
    </interactant>
    <interactant intactId="EBI-1752811">
        <id>Q9BQ89</id>
        <label>FAM110A</label>
    </interactant>
    <organismsDiffer>false</organismsDiffer>
    <experiments>4</experiments>
</comment>
<comment type="interaction">
    <interactant intactId="EBI-11522433">
        <id>Q5JR59-3</id>
    </interactant>
    <interactant intactId="EBI-11986315">
        <id>Q9H5Z6-2</id>
        <label>FAM124B</label>
    </interactant>
    <organismsDiffer>false</organismsDiffer>
    <experiments>4</experiments>
</comment>
<comment type="interaction">
    <interactant intactId="EBI-11522433">
        <id>Q5JR59-3</id>
    </interactant>
    <interactant intactId="EBI-719941">
        <id>Q3B820</id>
        <label>FAM161A</label>
    </interactant>
    <organismsDiffer>false</organismsDiffer>
    <experiments>5</experiments>
</comment>
<comment type="interaction">
    <interactant intactId="EBI-11522433">
        <id>Q5JR59-3</id>
    </interactant>
    <interactant intactId="EBI-7225287">
        <id>Q96MY7</id>
        <label>FAM161B</label>
    </interactant>
    <organismsDiffer>false</organismsDiffer>
    <experiments>3</experiments>
</comment>
<comment type="interaction">
    <interactant intactId="EBI-11522433">
        <id>Q5JR59-3</id>
    </interactant>
    <interactant intactId="EBI-6658203">
        <id>Q86YD7</id>
        <label>FAM90A1</label>
    </interactant>
    <organismsDiffer>false</organismsDiffer>
    <experiments>3</experiments>
</comment>
<comment type="interaction">
    <interactant intactId="EBI-11522433">
        <id>Q5JR59-3</id>
    </interactant>
    <interactant intactId="EBI-719816">
        <id>Q9NWN3</id>
        <label>FBXO34</label>
    </interactant>
    <organismsDiffer>false</organismsDiffer>
    <experiments>4</experiments>
</comment>
<comment type="interaction">
    <interactant intactId="EBI-11522433">
        <id>Q5JR59-3</id>
    </interactant>
    <interactant intactId="EBI-741068">
        <id>Q969U6</id>
        <label>FBXW5</label>
    </interactant>
    <organismsDiffer>false</organismsDiffer>
    <experiments>3</experiments>
</comment>
<comment type="interaction">
    <interactant intactId="EBI-11522433">
        <id>Q5JR59-3</id>
    </interactant>
    <interactant intactId="EBI-719415">
        <id>Q4VC44</id>
        <label>FLYWCH1</label>
    </interactant>
    <organismsDiffer>false</organismsDiffer>
    <experiments>3</experiments>
</comment>
<comment type="interaction">
    <interactant intactId="EBI-11522433">
        <id>Q5JR59-3</id>
    </interactant>
    <interactant intactId="EBI-372506">
        <id>Q8TAE8</id>
        <label>GADD45GIP1</label>
    </interactant>
    <organismsDiffer>false</organismsDiffer>
    <experiments>3</experiments>
</comment>
<comment type="interaction">
    <interactant intactId="EBI-11522433">
        <id>Q5JR59-3</id>
    </interactant>
    <interactant intactId="EBI-7960826">
        <id>Q8NHY3</id>
        <label>GAS2L2</label>
    </interactant>
    <organismsDiffer>false</organismsDiffer>
    <experiments>3</experiments>
</comment>
<comment type="interaction">
    <interactant intactId="EBI-11522433">
        <id>Q5JR59-3</id>
    </interactant>
    <interactant intactId="EBI-744104">
        <id>P55040</id>
        <label>GEM</label>
    </interactant>
    <organismsDiffer>false</organismsDiffer>
    <experiments>6</experiments>
</comment>
<comment type="interaction">
    <interactant intactId="EBI-11522433">
        <id>Q5JR59-3</id>
    </interactant>
    <interactant intactId="EBI-10259069">
        <id>Q86UU5</id>
        <label>GGN</label>
    </interactant>
    <organismsDiffer>false</organismsDiffer>
    <experiments>3</experiments>
</comment>
<comment type="interaction">
    <interactant intactId="EBI-11522433">
        <id>Q5JR59-3</id>
    </interactant>
    <interactant intactId="EBI-746682">
        <id>Q9NVN8</id>
        <label>GNL3L</label>
    </interactant>
    <organismsDiffer>false</organismsDiffer>
    <experiments>3</experiments>
</comment>
<comment type="interaction">
    <interactant intactId="EBI-11522433">
        <id>Q5JR59-3</id>
    </interactant>
    <interactant intactId="EBI-746309">
        <id>Q92917</id>
        <label>GPKOW</label>
    </interactant>
    <organismsDiffer>false</organismsDiffer>
    <experiments>3</experiments>
</comment>
<comment type="interaction">
    <interactant intactId="EBI-11522433">
        <id>Q5JR59-3</id>
    </interactant>
    <interactant intactId="EBI-353467">
        <id>P09211</id>
        <label>GSTP1</label>
    </interactant>
    <organismsDiffer>false</organismsDiffer>
    <experiments>3</experiments>
</comment>
<comment type="interaction">
    <interactant intactId="EBI-11522433">
        <id>Q5JR59-3</id>
    </interactant>
    <interactant intactId="EBI-11956675">
        <id>Q9GZV7</id>
        <label>HAPLN2</label>
    </interactant>
    <organismsDiffer>false</organismsDiffer>
    <experiments>3</experiments>
</comment>
<comment type="interaction">
    <interactant intactId="EBI-11522433">
        <id>Q5JR59-3</id>
    </interactant>
    <interactant intactId="EBI-719843">
        <id>P02008</id>
        <label>HBZ</label>
    </interactant>
    <organismsDiffer>false</organismsDiffer>
    <experiments>3</experiments>
</comment>
<comment type="interaction">
    <interactant intactId="EBI-11522433">
        <id>Q5JR59-3</id>
    </interactant>
    <interactant intactId="EBI-9834454">
        <id>P08631-2</id>
        <label>HCK</label>
    </interactant>
    <organismsDiffer>false</organismsDiffer>
    <experiments>3</experiments>
</comment>
<comment type="interaction">
    <interactant intactId="EBI-11522433">
        <id>Q5JR59-3</id>
    </interactant>
    <interactant intactId="EBI-11953488">
        <id>P56524-2</id>
        <label>HDAC4</label>
    </interactant>
    <organismsDiffer>false</organismsDiffer>
    <experiments>3</experiments>
</comment>
<comment type="interaction">
    <interactant intactId="EBI-11522433">
        <id>Q5JR59-3</id>
    </interactant>
    <interactant intactId="EBI-3893317">
        <id>P09067</id>
        <label>HOXB5</label>
    </interactant>
    <organismsDiffer>false</organismsDiffer>
    <experiments>3</experiments>
</comment>
<comment type="interaction">
    <interactant intactId="EBI-11522433">
        <id>Q5JR59-3</id>
    </interactant>
    <interactant intactId="EBI-745290">
        <id>P17482</id>
        <label>HOXB9</label>
    </interactant>
    <organismsDiffer>false</organismsDiffer>
    <experiments>3</experiments>
</comment>
<comment type="interaction">
    <interactant intactId="EBI-11522433">
        <id>Q5JR59-3</id>
    </interactant>
    <interactant intactId="EBI-2556750">
        <id>Q03933</id>
        <label>HSF2</label>
    </interactant>
    <organismsDiffer>false</organismsDiffer>
    <experiments>3</experiments>
</comment>
<comment type="interaction">
    <interactant intactId="EBI-11522433">
        <id>Q5JR59-3</id>
    </interactant>
    <interactant intactId="EBI-10233928">
        <id>Q14773-3</id>
        <label>ICAM4</label>
    </interactant>
    <organismsDiffer>false</organismsDiffer>
    <experiments>3</experiments>
</comment>
<comment type="interaction">
    <interactant intactId="EBI-11522433">
        <id>Q5JR59-3</id>
    </interactant>
    <interactant intactId="EBI-17178971">
        <id>Q14005-2</id>
        <label>IL16</label>
    </interactant>
    <organismsDiffer>false</organismsDiffer>
    <experiments>3</experiments>
</comment>
<comment type="interaction">
    <interactant intactId="EBI-11522433">
        <id>Q5JR59-3</id>
    </interactant>
    <interactant intactId="EBI-715611">
        <id>Q9C086</id>
        <label>INO80B</label>
    </interactant>
    <organismsDiffer>false</organismsDiffer>
    <experiments>3</experiments>
</comment>
<comment type="interaction">
    <interactant intactId="EBI-11522433">
        <id>Q5JR59-3</id>
    </interactant>
    <interactant intactId="EBI-11051601">
        <id>P16144-2</id>
        <label>ITGB4</label>
    </interactant>
    <organismsDiffer>false</organismsDiffer>
    <experiments>3</experiments>
</comment>
<comment type="interaction">
    <interactant intactId="EBI-11522433">
        <id>Q5JR59-3</id>
    </interactant>
    <interactant intactId="EBI-1223434">
        <id>P18084</id>
        <label>ITGB5</label>
    </interactant>
    <organismsDiffer>false</organismsDiffer>
    <experiments>3</experiments>
</comment>
<comment type="interaction">
    <interactant intactId="EBI-11522433">
        <id>Q5JR59-3</id>
    </interactant>
    <interactant intactId="EBI-10268138">
        <id>Q8N9B5-2</id>
        <label>JMY</label>
    </interactant>
    <organismsDiffer>false</organismsDiffer>
    <experiments>3</experiments>
</comment>
<comment type="interaction">
    <interactant intactId="EBI-11522433">
        <id>Q5JR59-3</id>
    </interactant>
    <interactant intactId="EBI-2510602">
        <id>Q15040</id>
        <label>JOSD1</label>
    </interactant>
    <organismsDiffer>false</organismsDiffer>
    <experiments>3</experiments>
</comment>
<comment type="interaction">
    <interactant intactId="EBI-11522433">
        <id>Q5JR59-3</id>
    </interactant>
    <interactant intactId="EBI-17181882">
        <id>O75564-2</id>
        <label>JRK</label>
    </interactant>
    <organismsDiffer>false</organismsDiffer>
    <experiments>3</experiments>
</comment>
<comment type="interaction">
    <interactant intactId="EBI-11522433">
        <id>Q5JR59-3</id>
    </interactant>
    <interactant intactId="EBI-2556193">
        <id>Q63ZY3</id>
        <label>KANK2</label>
    </interactant>
    <organismsDiffer>false</organismsDiffer>
    <experiments>3</experiments>
</comment>
<comment type="interaction">
    <interactant intactId="EBI-11522433">
        <id>Q5JR59-3</id>
    </interactant>
    <interactant intactId="EBI-399080">
        <id>Q92993</id>
        <label>KAT5</label>
    </interactant>
    <organismsDiffer>false</organismsDiffer>
    <experiments>4</experiments>
</comment>
<comment type="interaction">
    <interactant intactId="EBI-11522433">
        <id>Q5JR59-3</id>
    </interactant>
    <interactant intactId="EBI-14069005">
        <id>Q9BVG8-5</id>
        <label>KIFC3</label>
    </interactant>
    <organismsDiffer>false</organismsDiffer>
    <experiments>5</experiments>
</comment>
<comment type="interaction">
    <interactant intactId="EBI-11522433">
        <id>Q5JR59-3</id>
    </interactant>
    <interactant intactId="EBI-2949715">
        <id>O95678</id>
        <label>KRT75</label>
    </interactant>
    <organismsDiffer>false</organismsDiffer>
    <experiments>3</experiments>
</comment>
<comment type="interaction">
    <interactant intactId="EBI-11522433">
        <id>Q5JR59-3</id>
    </interactant>
    <interactant intactId="EBI-2952745">
        <id>Q01546</id>
        <label>KRT76</label>
    </interactant>
    <organismsDiffer>false</organismsDiffer>
    <experiments>3</experiments>
</comment>
<comment type="interaction">
    <interactant intactId="EBI-11522433">
        <id>Q5JR59-3</id>
    </interactant>
    <interactant intactId="EBI-726510">
        <id>Q96BZ8</id>
        <label>LENG1</label>
    </interactant>
    <organismsDiffer>false</organismsDiffer>
    <experiments>3</experiments>
</comment>
<comment type="interaction">
    <interactant intactId="EBI-11522433">
        <id>Q5JR59-3</id>
    </interactant>
    <interactant intactId="EBI-11742507">
        <id>Q8TAP4-4</id>
        <label>LMO3</label>
    </interactant>
    <organismsDiffer>false</organismsDiffer>
    <experiments>3</experiments>
</comment>
<comment type="interaction">
    <interactant intactId="EBI-11522433">
        <id>Q5JR59-3</id>
    </interactant>
    <interactant intactId="EBI-2798728">
        <id>P61968</id>
        <label>LMO4</label>
    </interactant>
    <organismsDiffer>false</organismsDiffer>
    <experiments>4</experiments>
</comment>
<comment type="interaction">
    <interactant intactId="EBI-11522433">
        <id>Q5JR59-3</id>
    </interactant>
    <interactant intactId="EBI-739832">
        <id>Q8TBB1</id>
        <label>LNX1</label>
    </interactant>
    <organismsDiffer>false</organismsDiffer>
    <experiments>3</experiments>
</comment>
<comment type="interaction">
    <interactant intactId="EBI-11522433">
        <id>Q5JR59-3</id>
    </interactant>
    <interactant intactId="EBI-11978579">
        <id>O95983-2</id>
        <label>MBD3</label>
    </interactant>
    <organismsDiffer>false</organismsDiffer>
    <experiments>3</experiments>
</comment>
<comment type="interaction">
    <interactant intactId="EBI-11522433">
        <id>Q5JR59-3</id>
    </interactant>
    <interactant intactId="EBI-11098807">
        <id>Q9H7H0-2</id>
        <label>METTL17</label>
    </interactant>
    <organismsDiffer>false</organismsDiffer>
    <experiments>3</experiments>
</comment>
<comment type="interaction">
    <interactant intactId="EBI-11522433">
        <id>Q5JR59-3</id>
    </interactant>
    <interactant intactId="EBI-14086479">
        <id>Q8IVT4</id>
        <label>MGC50722</label>
    </interactant>
    <organismsDiffer>false</organismsDiffer>
    <experiments>3</experiments>
</comment>
<comment type="interaction">
    <interactant intactId="EBI-11522433">
        <id>Q5JR59-3</id>
    </interactant>
    <interactant intactId="EBI-742459">
        <id>Q9BU76</id>
        <label>MMTAG2</label>
    </interactant>
    <organismsDiffer>false</organismsDiffer>
    <experiments>3</experiments>
</comment>
<comment type="interaction">
    <interactant intactId="EBI-11522433">
        <id>Q5JR59-3</id>
    </interactant>
    <interactant intactId="EBI-1757866">
        <id>P00540</id>
        <label>MOS</label>
    </interactant>
    <organismsDiffer>false</organismsDiffer>
    <experiments>4</experiments>
</comment>
<comment type="interaction">
    <interactant intactId="EBI-11522433">
        <id>Q5JR59-3</id>
    </interactant>
    <interactant intactId="EBI-5453723">
        <id>Q9Y3B7</id>
        <label>MRPL11</label>
    </interactant>
    <organismsDiffer>false</organismsDiffer>
    <experiments>5</experiments>
</comment>
<comment type="interaction">
    <interactant intactId="EBI-11522433">
        <id>Q5JR59-3</id>
    </interactant>
    <interactant intactId="EBI-7950783">
        <id>Q96JP2</id>
        <label>MYO15B</label>
    </interactant>
    <organismsDiffer>false</organismsDiffer>
    <experiments>3</experiments>
</comment>
<comment type="interaction">
    <interactant intactId="EBI-11522433">
        <id>Q5JR59-3</id>
    </interactant>
    <interactant intactId="EBI-12010196">
        <id>P52179-2</id>
        <label>MYOM1</label>
    </interactant>
    <organismsDiffer>false</organismsDiffer>
    <experiments>3</experiments>
</comment>
<comment type="interaction">
    <interactant intactId="EBI-11522433">
        <id>Q5JR59-3</id>
    </interactant>
    <interactant intactId="EBI-2858213">
        <id>Q86VE0</id>
        <label>MYPOP</label>
    </interactant>
    <organismsDiffer>false</organismsDiffer>
    <experiments>5</experiments>
</comment>
<comment type="interaction">
    <interactant intactId="EBI-11522433">
        <id>Q5JR59-3</id>
    </interactant>
    <interactant intactId="EBI-10249760">
        <id>Q9UHB4</id>
        <label>NDOR1</label>
    </interactant>
    <organismsDiffer>false</organismsDiffer>
    <experiments>3</experiments>
</comment>
<comment type="interaction">
    <interactant intactId="EBI-11522433">
        <id>Q5JR59-3</id>
    </interactant>
    <interactant intactId="EBI-10178578">
        <id>I6L9F6</id>
        <label>NEFL</label>
    </interactant>
    <organismsDiffer>false</organismsDiffer>
    <experiments>3</experiments>
</comment>
<comment type="interaction">
    <interactant intactId="EBI-11522433">
        <id>Q5JR59-3</id>
    </interactant>
    <interactant intactId="EBI-2859639">
        <id>Q5HYW2</id>
        <label>NHSL2</label>
    </interactant>
    <organismsDiffer>false</organismsDiffer>
    <experiments>3</experiments>
</comment>
<comment type="interaction">
    <interactant intactId="EBI-11522433">
        <id>Q5JR59-3</id>
    </interactant>
    <interactant intactId="EBI-741158">
        <id>Q96HA8</id>
        <label>NTAQ1</label>
    </interactant>
    <organismsDiffer>false</organismsDiffer>
    <experiments>5</experiments>
</comment>
<comment type="interaction">
    <interactant intactId="EBI-11522433">
        <id>Q5JR59-3</id>
    </interactant>
    <interactant intactId="EBI-398874">
        <id>Q9UBU9</id>
        <label>NXF1</label>
    </interactant>
    <organismsDiffer>false</organismsDiffer>
    <experiments>3</experiments>
</comment>
<comment type="interaction">
    <interactant intactId="EBI-11522433">
        <id>Q5JR59-3</id>
    </interactant>
    <interactant intactId="EBI-8466445">
        <id>A5D8V7</id>
        <label>ODAD3</label>
    </interactant>
    <organismsDiffer>false</organismsDiffer>
    <experiments>3</experiments>
</comment>
<comment type="interaction">
    <interactant intactId="EBI-11522433">
        <id>Q5JR59-3</id>
    </interactant>
    <interactant intactId="EBI-10329013">
        <id>Q9Y5E9</id>
        <label>PCDHB14</label>
    </interactant>
    <organismsDiffer>false</organismsDiffer>
    <experiments>3</experiments>
</comment>
<comment type="interaction">
    <interactant intactId="EBI-11522433">
        <id>Q5JR59-3</id>
    </interactant>
    <interactant intactId="EBI-10239064">
        <id>Q17RL8</id>
        <label>PDZD4</label>
    </interactant>
    <organismsDiffer>false</organismsDiffer>
    <experiments>3</experiments>
</comment>
<comment type="interaction">
    <interactant intactId="EBI-11522433">
        <id>Q5JR59-3</id>
    </interactant>
    <interactant intactId="EBI-14066006">
        <id>Q4G0R1</id>
        <label>PIBF1</label>
    </interactant>
    <organismsDiffer>false</organismsDiffer>
    <experiments>3</experiments>
</comment>
<comment type="interaction">
    <interactant intactId="EBI-11522433">
        <id>Q5JR59-3</id>
    </interactant>
    <interactant intactId="EBI-714158">
        <id>Q13526</id>
        <label>PIN1</label>
    </interactant>
    <organismsDiffer>false</organismsDiffer>
    <experiments>3</experiments>
</comment>
<comment type="interaction">
    <interactant intactId="EBI-11522433">
        <id>Q5JR59-3</id>
    </interactant>
    <interactant intactId="EBI-602382">
        <id>Q16512</id>
        <label>PKN1</label>
    </interactant>
    <organismsDiffer>false</organismsDiffer>
    <experiments>3</experiments>
</comment>
<comment type="interaction">
    <interactant intactId="EBI-11522433">
        <id>Q5JR59-3</id>
    </interactant>
    <interactant intactId="EBI-1384335">
        <id>Q6P5Z2</id>
        <label>PKN3</label>
    </interactant>
    <organismsDiffer>false</organismsDiffer>
    <experiments>3</experiments>
</comment>
<comment type="interaction">
    <interactant intactId="EBI-11522433">
        <id>Q5JR59-3</id>
    </interactant>
    <interactant intactId="EBI-10987518">
        <id>Q99959-2</id>
        <label>PKP2</label>
    </interactant>
    <organismsDiffer>false</organismsDiffer>
    <experiments>6</experiments>
</comment>
<comment type="interaction">
    <interactant intactId="EBI-11522433">
        <id>Q5JR59-3</id>
    </interactant>
    <interactant intactId="EBI-12014286">
        <id>Q494U1-3</id>
        <label>PLEKHN1</label>
    </interactant>
    <organismsDiffer>false</organismsDiffer>
    <experiments>3</experiments>
</comment>
<comment type="interaction">
    <interactant intactId="EBI-11522433">
        <id>Q5JR59-3</id>
    </interactant>
    <interactant intactId="EBI-10276663">
        <id>Q8WUT1</id>
        <label>POLDIP3</label>
    </interactant>
    <organismsDiffer>false</organismsDiffer>
    <experiments>3</experiments>
</comment>
<comment type="interaction">
    <interactant intactId="EBI-11522433">
        <id>Q5JR59-3</id>
    </interactant>
    <interactant intactId="EBI-2557469">
        <id>Q6NYC8</id>
        <label>PPP1R18</label>
    </interactant>
    <organismsDiffer>false</organismsDiffer>
    <experiments>3</experiments>
</comment>
<comment type="interaction">
    <interactant intactId="EBI-11522433">
        <id>Q5JR59-3</id>
    </interactant>
    <interactant intactId="EBI-1383852">
        <id>P54646</id>
        <label>PRKAA2</label>
    </interactant>
    <organismsDiffer>false</organismsDiffer>
    <experiments>4</experiments>
</comment>
<comment type="interaction">
    <interactant intactId="EBI-11522433">
        <id>Q5JR59-3</id>
    </interactant>
    <interactant intactId="EBI-2798416">
        <id>Q99633</id>
        <label>PRPF18</label>
    </interactant>
    <organismsDiffer>false</organismsDiffer>
    <experiments>3</experiments>
</comment>
<comment type="interaction">
    <interactant intactId="EBI-11522433">
        <id>Q5JR59-3</id>
    </interactant>
    <interactant intactId="EBI-1567797">
        <id>Q8WWY3</id>
        <label>PRPF31</label>
    </interactant>
    <organismsDiffer>false</organismsDiffer>
    <experiments>6</experiments>
</comment>
<comment type="interaction">
    <interactant intactId="EBI-11522433">
        <id>Q5JR59-3</id>
    </interactant>
    <interactant intactId="EBI-11986293">
        <id>P0CG20</id>
        <label>PRR35</label>
    </interactant>
    <organismsDiffer>false</organismsDiffer>
    <experiments>3</experiments>
</comment>
<comment type="interaction">
    <interactant intactId="EBI-11522433">
        <id>Q5JR59-3</id>
    </interactant>
    <interactant intactId="EBI-359352">
        <id>P25786</id>
        <label>PSMA1</label>
    </interactant>
    <organismsDiffer>false</organismsDiffer>
    <experiments>3</experiments>
</comment>
<comment type="interaction">
    <interactant intactId="EBI-11522433">
        <id>Q5JR59-3</id>
    </interactant>
    <interactant intactId="EBI-372273">
        <id>P20618</id>
        <label>PSMB1</label>
    </interactant>
    <organismsDiffer>false</organismsDiffer>
    <experiments>3</experiments>
</comment>
<comment type="interaction">
    <interactant intactId="EBI-11522433">
        <id>Q5JR59-3</id>
    </interactant>
    <interactant intactId="EBI-2560233">
        <id>O75127</id>
        <label>PTCD1</label>
    </interactant>
    <organismsDiffer>false</organismsDiffer>
    <experiments>3</experiments>
</comment>
<comment type="interaction">
    <interactant intactId="EBI-11522433">
        <id>Q5JR59-3</id>
    </interactant>
    <interactant intactId="EBI-2803245">
        <id>Q13308</id>
        <label>PTK7</label>
    </interactant>
    <organismsDiffer>false</organismsDiffer>
    <experiments>3</experiments>
</comment>
<comment type="interaction">
    <interactant intactId="EBI-11522433">
        <id>Q5JR59-3</id>
    </interactant>
    <interactant intactId="EBI-743796">
        <id>Q8TBN0</id>
        <label>RAB3IL1</label>
    </interactant>
    <organismsDiffer>false</organismsDiffer>
    <experiments>4</experiments>
</comment>
<comment type="interaction">
    <interactant intactId="EBI-11522433">
        <id>Q5JR59-3</id>
    </interactant>
    <interactant intactId="EBI-9512693">
        <id>Q53GL6</id>
        <label>RALY</label>
    </interactant>
    <organismsDiffer>false</organismsDiffer>
    <experiments>3</experiments>
</comment>
<comment type="interaction">
    <interactant intactId="EBI-11522433">
        <id>Q5JR59-3</id>
    </interactant>
    <interactant intactId="EBI-12028066">
        <id>Q86VV4</id>
        <label>RANBP3L</label>
    </interactant>
    <organismsDiffer>false</organismsDiffer>
    <experiments>3</experiments>
</comment>
<comment type="interaction">
    <interactant intactId="EBI-11522433">
        <id>Q5JR59-3</id>
    </interactant>
    <interactant intactId="EBI-358143">
        <id>P61224</id>
        <label>RAP1B</label>
    </interactant>
    <organismsDiffer>false</organismsDiffer>
    <experiments>3</experiments>
</comment>
<comment type="interaction">
    <interactant intactId="EBI-11522433">
        <id>Q5JR59-3</id>
    </interactant>
    <interactant intactId="EBI-3437896">
        <id>Q86YV0</id>
        <label>RASAL3</label>
    </interactant>
    <organismsDiffer>false</organismsDiffer>
    <experiments>3</experiments>
</comment>
<comment type="interaction">
    <interactant intactId="EBI-11522433">
        <id>Q5JR59-3</id>
    </interactant>
    <interactant intactId="EBI-740818">
        <id>Q9Y272</id>
        <label>RASD1</label>
    </interactant>
    <organismsDiffer>false</organismsDiffer>
    <experiments>3</experiments>
</comment>
<comment type="interaction">
    <interactant intactId="EBI-11522433">
        <id>Q5JR59-3</id>
    </interactant>
    <interactant intactId="EBI-740773">
        <id>Q96IZ5</id>
        <label>RBM41</label>
    </interactant>
    <organismsDiffer>false</organismsDiffer>
    <experiments>3</experiments>
</comment>
<comment type="interaction">
    <interactant intactId="EBI-11522433">
        <id>Q5JR59-3</id>
    </interactant>
    <interactant intactId="EBI-1504830">
        <id>Q9P2K3-2</id>
        <label>RCOR3</label>
    </interactant>
    <organismsDiffer>false</organismsDiffer>
    <experiments>4</experiments>
</comment>
<comment type="interaction">
    <interactant intactId="EBI-11522433">
        <id>Q5JR59-3</id>
    </interactant>
    <interactant intactId="EBI-712388">
        <id>P41220</id>
        <label>RGS2</label>
    </interactant>
    <organismsDiffer>false</organismsDiffer>
    <experiments>3</experiments>
</comment>
<comment type="interaction">
    <interactant intactId="EBI-11522433">
        <id>Q5JR59-3</id>
    </interactant>
    <interactant intactId="EBI-16428950">
        <id>A0A0S2Z4G9</id>
        <label>RNF6</label>
    </interactant>
    <organismsDiffer>false</organismsDiffer>
    <experiments>4</experiments>
</comment>
<comment type="interaction">
    <interactant intactId="EBI-11522433">
        <id>Q5JR59-3</id>
    </interactant>
    <interactant intactId="EBI-621389">
        <id>P27694</id>
        <label>RPA1</label>
    </interactant>
    <organismsDiffer>false</organismsDiffer>
    <experiments>3</experiments>
</comment>
<comment type="interaction">
    <interactant intactId="EBI-11522433">
        <id>Q5JR59-3</id>
    </interactant>
    <interactant intactId="EBI-4479407">
        <id>Q86WX3</id>
        <label>RPS19BP1</label>
    </interactant>
    <organismsDiffer>false</organismsDiffer>
    <experiments>3</experiments>
</comment>
<comment type="interaction">
    <interactant intactId="EBI-11522433">
        <id>Q5JR59-3</id>
    </interactant>
    <interactant intactId="EBI-10217913">
        <id>Q14D33</id>
        <label>RTP5</label>
    </interactant>
    <organismsDiffer>false</organismsDiffer>
    <experiments>3</experiments>
</comment>
<comment type="interaction">
    <interactant intactId="EBI-11522433">
        <id>Q5JR59-3</id>
    </interactant>
    <interactant intactId="EBI-11986417">
        <id>Q9UPU9-3</id>
        <label>SAMD4A</label>
    </interactant>
    <organismsDiffer>false</organismsDiffer>
    <experiments>3</experiments>
</comment>
<comment type="interaction">
    <interactant intactId="EBI-11522433">
        <id>Q5JR59-3</id>
    </interactant>
    <interactant intactId="EBI-748391">
        <id>Q9BWG6</id>
        <label>SCNM1</label>
    </interactant>
    <organismsDiffer>false</organismsDiffer>
    <experiments>7</experiments>
</comment>
<comment type="interaction">
    <interactant intactId="EBI-11522433">
        <id>Q5JR59-3</id>
    </interactant>
    <interactant intactId="EBI-727004">
        <id>O00560</id>
        <label>SDCBP</label>
    </interactant>
    <organismsDiffer>false</organismsDiffer>
    <experiments>3</experiments>
</comment>
<comment type="interaction">
    <interactant intactId="EBI-11522433">
        <id>Q5JR59-3</id>
    </interactant>
    <interactant intactId="EBI-747035">
        <id>Q9H788</id>
        <label>SH2D4A</label>
    </interactant>
    <organismsDiffer>false</organismsDiffer>
    <experiments>5</experiments>
</comment>
<comment type="interaction">
    <interactant intactId="EBI-11522433">
        <id>Q5JR59-3</id>
    </interactant>
    <interactant intactId="EBI-2130111">
        <id>Q8TEC5</id>
        <label>SH3RF2</label>
    </interactant>
    <organismsDiffer>false</organismsDiffer>
    <experiments>4</experiments>
</comment>
<comment type="interaction">
    <interactant intactId="EBI-11522433">
        <id>Q5JR59-3</id>
    </interactant>
    <interactant intactId="EBI-11955083">
        <id>Q9NUL5-4</id>
        <label>SHFL</label>
    </interactant>
    <organismsDiffer>false</organismsDiffer>
    <experiments>3</experiments>
</comment>
<comment type="interaction">
    <interactant intactId="EBI-11522433">
        <id>Q5JR59-3</id>
    </interactant>
    <interactant intactId="EBI-9846338">
        <id>O76082</id>
        <label>SLC22A5</label>
    </interactant>
    <organismsDiffer>false</organismsDiffer>
    <experiments>3</experiments>
</comment>
<comment type="interaction">
    <interactant intactId="EBI-11522433">
        <id>Q5JR59-3</id>
    </interactant>
    <interactant intactId="EBI-6598313">
        <id>Q86VD7</id>
        <label>SLC25A42</label>
    </interactant>
    <organismsDiffer>false</organismsDiffer>
    <experiments>3</experiments>
</comment>
<comment type="interaction">
    <interactant intactId="EBI-11522433">
        <id>Q5JR59-3</id>
    </interactant>
    <interactant intactId="EBI-12065614">
        <id>Q6ZT89-3</id>
        <label>SLC25A48</label>
    </interactant>
    <organismsDiffer>false</organismsDiffer>
    <experiments>3</experiments>
</comment>
<comment type="interaction">
    <interactant intactId="EBI-11522433">
        <id>Q5JR59-3</id>
    </interactant>
    <interactant intactId="EBI-358489">
        <id>Q96GM5</id>
        <label>SMARCD1</label>
    </interactant>
    <organismsDiffer>false</organismsDiffer>
    <experiments>3</experiments>
</comment>
<comment type="interaction">
    <interactant intactId="EBI-11522433">
        <id>Q5JR59-3</id>
    </interactant>
    <interactant intactId="EBI-455078">
        <id>Q969G3</id>
        <label>SMARCE1</label>
    </interactant>
    <organismsDiffer>false</organismsDiffer>
    <experiments>3</experiments>
</comment>
<comment type="interaction">
    <interactant intactId="EBI-11522433">
        <id>Q5JR59-3</id>
    </interactant>
    <interactant intactId="EBI-2872322">
        <id>Q9H0W8</id>
        <label>SMG9</label>
    </interactant>
    <organismsDiffer>false</organismsDiffer>
    <experiments>3</experiments>
</comment>
<comment type="interaction">
    <interactant intactId="EBI-11522433">
        <id>Q5JR59-3</id>
    </interactant>
    <interactant intactId="EBI-632715">
        <id>Q13573</id>
        <label>SNW1</label>
    </interactant>
    <organismsDiffer>false</organismsDiffer>
    <experiments>3</experiments>
</comment>
<comment type="interaction">
    <interactant intactId="EBI-11522433">
        <id>Q5JR59-3</id>
    </interactant>
    <interactant intactId="EBI-8635958">
        <id>Q6RVD6</id>
        <label>SPATA8</label>
    </interactant>
    <organismsDiffer>false</organismsDiffer>
    <experiments>3</experiments>
</comment>
<comment type="interaction">
    <interactant intactId="EBI-11522433">
        <id>Q5JR59-3</id>
    </interactant>
    <interactant intactId="EBI-11995806">
        <id>Q9H0A9-2</id>
        <label>SPATC1L</label>
    </interactant>
    <organismsDiffer>false</organismsDiffer>
    <experiments>3</experiments>
</comment>
<comment type="interaction">
    <interactant intactId="EBI-11522433">
        <id>Q5JR59-3</id>
    </interactant>
    <interactant intactId="EBI-742688">
        <id>Q9NZD8</id>
        <label>SPG21</label>
    </interactant>
    <organismsDiffer>false</organismsDiffer>
    <experiments>3</experiments>
</comment>
<comment type="interaction">
    <interactant intactId="EBI-11522433">
        <id>Q5JR59-3</id>
    </interactant>
    <interactant intactId="EBI-747797">
        <id>Q9BSH4</id>
        <label>TACO1</label>
    </interactant>
    <organismsDiffer>false</organismsDiffer>
    <experiments>3</experiments>
</comment>
<comment type="interaction">
    <interactant intactId="EBI-11522433">
        <id>Q5JR59-3</id>
    </interactant>
    <interactant intactId="EBI-1026992">
        <id>Q15543</id>
        <label>TAF13</label>
    </interactant>
    <organismsDiffer>false</organismsDiffer>
    <experiments>4</experiments>
</comment>
<comment type="interaction">
    <interactant intactId="EBI-11522433">
        <id>Q5JR59-3</id>
    </interactant>
    <interactant intactId="EBI-8787464">
        <id>Q9NU19</id>
        <label>TBC1D22B</label>
    </interactant>
    <organismsDiffer>false</organismsDiffer>
    <experiments>4</experiments>
</comment>
<comment type="interaction">
    <interactant intactId="EBI-11522433">
        <id>Q5JR59-3</id>
    </interactant>
    <interactant intactId="EBI-710310">
        <id>Q15560</id>
        <label>TCEA2</label>
    </interactant>
    <organismsDiffer>false</organismsDiffer>
    <experiments>3</experiments>
</comment>
<comment type="interaction">
    <interactant intactId="EBI-11522433">
        <id>Q5JR59-3</id>
    </interactant>
    <interactant intactId="EBI-11955057">
        <id>Q8N8B7-2</id>
        <label>TCEANC</label>
    </interactant>
    <organismsDiffer>false</organismsDiffer>
    <experiments>3</experiments>
</comment>
<comment type="interaction">
    <interactant intactId="EBI-11522433">
        <id>Q5JR59-3</id>
    </interactant>
    <interactant intactId="EBI-740781">
        <id>Q9BT92</id>
        <label>TCHP</label>
    </interactant>
    <organismsDiffer>false</organismsDiffer>
    <experiments>3</experiments>
</comment>
<comment type="interaction">
    <interactant intactId="EBI-11522433">
        <id>Q5JR59-3</id>
    </interactant>
    <interactant intactId="EBI-16429215">
        <id>A0A0S2Z4F2</id>
        <label>TEAD4</label>
    </interactant>
    <organismsDiffer>false</organismsDiffer>
    <experiments>3</experiments>
</comment>
<comment type="interaction">
    <interactant intactId="EBI-11522433">
        <id>Q5JR59-3</id>
    </interactant>
    <interactant intactId="EBI-747736">
        <id>Q15561</id>
        <label>TEAD4</label>
    </interactant>
    <organismsDiffer>false</organismsDiffer>
    <experiments>6</experiments>
</comment>
<comment type="interaction">
    <interactant intactId="EBI-11522433">
        <id>Q5JR59-3</id>
    </interactant>
    <interactant intactId="EBI-11139477">
        <id>Q96N21</id>
        <label>TEPSIN</label>
    </interactant>
    <organismsDiffer>false</organismsDiffer>
    <experiments>3</experiments>
</comment>
<comment type="interaction">
    <interactant intactId="EBI-11522433">
        <id>Q5JR59-3</id>
    </interactant>
    <interactant intactId="EBI-741350">
        <id>Q9BT49</id>
        <label>THAP7</label>
    </interactant>
    <organismsDiffer>false</organismsDiffer>
    <experiments>6</experiments>
</comment>
<comment type="interaction">
    <interactant intactId="EBI-11522433">
        <id>Q5JR59-3</id>
    </interactant>
    <interactant intactId="EBI-11741437">
        <id>Q08117-2</id>
        <label>TLE5</label>
    </interactant>
    <organismsDiffer>false</organismsDiffer>
    <experiments>6</experiments>
</comment>
<comment type="interaction">
    <interactant intactId="EBI-11522433">
        <id>Q5JR59-3</id>
    </interactant>
    <interactant intactId="EBI-2509913">
        <id>Q96KP6</id>
        <label>TNIP3</label>
    </interactant>
    <organismsDiffer>false</organismsDiffer>
    <experiments>3</experiments>
</comment>
<comment type="interaction">
    <interactant intactId="EBI-11522433">
        <id>Q5JR59-3</id>
    </interactant>
    <interactant intactId="EBI-746692">
        <id>P19237</id>
        <label>TNNI1</label>
    </interactant>
    <organismsDiffer>false</organismsDiffer>
    <experiments>3</experiments>
</comment>
<comment type="interaction">
    <interactant intactId="EBI-11522433">
        <id>Q5JR59-3</id>
    </interactant>
    <interactant intactId="EBI-702370">
        <id>Q14134</id>
        <label>TRIM29</label>
    </interactant>
    <organismsDiffer>false</organismsDiffer>
    <experiments>3</experiments>
</comment>
<comment type="interaction">
    <interactant intactId="EBI-11522433">
        <id>Q5JR59-3</id>
    </interactant>
    <interactant intactId="EBI-10241197">
        <id>Q3SY00</id>
        <label>TSGA10IP</label>
    </interactant>
    <organismsDiffer>false</organismsDiffer>
    <experiments>4</experiments>
</comment>
<comment type="interaction">
    <interactant intactId="EBI-11522433">
        <id>Q5JR59-3</id>
    </interactant>
    <interactant intactId="EBI-9053916">
        <id>Q63HK5</id>
        <label>TSHZ3</label>
    </interactant>
    <organismsDiffer>false</organismsDiffer>
    <experiments>3</experiments>
</comment>
<comment type="interaction">
    <interactant intactId="EBI-11522433">
        <id>Q5JR59-3</id>
    </interactant>
    <interactant intactId="EBI-9090990">
        <id>Q5W5X9-3</id>
        <label>TTC23</label>
    </interactant>
    <organismsDiffer>false</organismsDiffer>
    <experiments>4</experiments>
</comment>
<comment type="interaction">
    <interactant intactId="EBI-11522433">
        <id>Q5JR59-3</id>
    </interactant>
    <interactant intactId="EBI-11979997">
        <id>Q6ZVT0-3</id>
        <label>TTLL10</label>
    </interactant>
    <organismsDiffer>false</organismsDiffer>
    <experiments>3</experiments>
</comment>
<comment type="interaction">
    <interactant intactId="EBI-11522433">
        <id>Q5JR59-3</id>
    </interactant>
    <interactant intactId="EBI-2932492">
        <id>Q99757</id>
        <label>TXN2</label>
    </interactant>
    <organismsDiffer>false</organismsDiffer>
    <experiments>3</experiments>
</comment>
<comment type="interaction">
    <interactant intactId="EBI-11522433">
        <id>Q5JR59-3</id>
    </interactant>
    <interactant intactId="EBI-17208936">
        <id>P0CB47</id>
        <label>UBTFL1</label>
    </interactant>
    <organismsDiffer>false</organismsDiffer>
    <experiments>3</experiments>
</comment>
<comment type="interaction">
    <interactant intactId="EBI-11522433">
        <id>Q5JR59-3</id>
    </interactant>
    <interactant intactId="EBI-743272">
        <id>O75604</id>
        <label>USP2</label>
    </interactant>
    <organismsDiffer>false</organismsDiffer>
    <experiments>3</experiments>
</comment>
<comment type="interaction">
    <interactant intactId="EBI-11522433">
        <id>Q5JR59-3</id>
    </interactant>
    <interactant intactId="EBI-12074414">
        <id>Q9UPT9-2</id>
        <label>USP22</label>
    </interactant>
    <organismsDiffer>false</organismsDiffer>
    <experiments>3</experiments>
</comment>
<comment type="interaction">
    <interactant intactId="EBI-11522433">
        <id>Q5JR59-3</id>
    </interactant>
    <interactant intactId="EBI-11737646">
        <id>Q5TAP6</id>
        <label>UTP14C</label>
    </interactant>
    <organismsDiffer>false</organismsDiffer>
    <experiments>3</experiments>
</comment>
<comment type="interaction">
    <interactant intactId="EBI-11522433">
        <id>Q5JR59-3</id>
    </interactant>
    <interactant intactId="EBI-10249550">
        <id>Q6EMK4</id>
        <label>VASN</label>
    </interactant>
    <organismsDiffer>false</organismsDiffer>
    <experiments>3</experiments>
</comment>
<comment type="interaction">
    <interactant intactId="EBI-11522433">
        <id>Q5JR59-3</id>
    </interactant>
    <interactant intactId="EBI-711925">
        <id>Q05516</id>
        <label>ZBTB16</label>
    </interactant>
    <organismsDiffer>false</organismsDiffer>
    <experiments>3</experiments>
</comment>
<comment type="interaction">
    <interactant intactId="EBI-11522433">
        <id>Q5JR59-3</id>
    </interactant>
    <interactant intactId="EBI-7781767">
        <id>Q9UFB7</id>
        <label>ZBTB47</label>
    </interactant>
    <organismsDiffer>false</organismsDiffer>
    <experiments>3</experiments>
</comment>
<comment type="interaction">
    <interactant intactId="EBI-11522433">
        <id>Q5JR59-3</id>
    </interactant>
    <interactant intactId="EBI-10237226">
        <id>Q15911-2</id>
        <label>ZFHX3</label>
    </interactant>
    <organismsDiffer>false</organismsDiffer>
    <experiments>3</experiments>
</comment>
<comment type="interaction">
    <interactant intactId="EBI-11522433">
        <id>Q5JR59-3</id>
    </interactant>
    <interactant intactId="EBI-2555749">
        <id>Q6P2D0</id>
        <label>ZFP1</label>
    </interactant>
    <organismsDiffer>false</organismsDiffer>
    <experiments>3</experiments>
</comment>
<comment type="interaction">
    <interactant intactId="EBI-11522433">
        <id>Q5JR59-3</id>
    </interactant>
    <interactant intactId="EBI-2682299">
        <id>Q96NC0</id>
        <label>ZMAT2</label>
    </interactant>
    <organismsDiffer>false</organismsDiffer>
    <experiments>3</experiments>
</comment>
<comment type="interaction">
    <interactant intactId="EBI-11522433">
        <id>Q5JR59-3</id>
    </interactant>
    <interactant intactId="EBI-747061">
        <id>O75800</id>
        <label>ZMYND10</label>
    </interactant>
    <organismsDiffer>false</organismsDiffer>
    <experiments>3</experiments>
</comment>
<comment type="interaction">
    <interactant intactId="EBI-11522433">
        <id>Q5JR59-3</id>
    </interactant>
    <interactant intactId="EBI-2555767">
        <id>Q15973</id>
        <label>ZNF124</label>
    </interactant>
    <organismsDiffer>false</organismsDiffer>
    <experiments>3</experiments>
</comment>
<comment type="interaction">
    <interactant intactId="EBI-11522433">
        <id>Q5JR59-3</id>
    </interactant>
    <interactant intactId="EBI-749129">
        <id>P52737</id>
        <label>ZNF136</label>
    </interactant>
    <organismsDiffer>false</organismsDiffer>
    <experiments>4</experiments>
</comment>
<comment type="interaction">
    <interactant intactId="EBI-11522433">
        <id>Q5JR59-3</id>
    </interactant>
    <interactant intactId="EBI-1105334">
        <id>P17021</id>
        <label>ZNF17</label>
    </interactant>
    <organismsDiffer>false</organismsDiffer>
    <experiments>3</experiments>
</comment>
<comment type="interaction">
    <interactant intactId="EBI-11522433">
        <id>Q5JR59-3</id>
    </interactant>
    <interactant intactId="EBI-717634">
        <id>P17024</id>
        <label>ZNF20</label>
    </interactant>
    <organismsDiffer>false</organismsDiffer>
    <experiments>3</experiments>
</comment>
<comment type="interaction">
    <interactant intactId="EBI-11522433">
        <id>Q5JR59-3</id>
    </interactant>
    <interactant intactId="EBI-5657766">
        <id>P17027</id>
        <label>ZNF23</label>
    </interactant>
    <organismsDiffer>false</organismsDiffer>
    <experiments>3</experiments>
</comment>
<comment type="interaction">
    <interactant intactId="EBI-11522433">
        <id>Q5JR59-3</id>
    </interactant>
    <interactant intactId="EBI-1105361">
        <id>Q9UIE0</id>
        <label>ZNF230</label>
    </interactant>
    <organismsDiffer>false</organismsDiffer>
    <experiments>3</experiments>
</comment>
<comment type="interaction">
    <interactant intactId="EBI-11522433">
        <id>Q5JR59-3</id>
    </interactant>
    <interactant intactId="EBI-749023">
        <id>Q9UNY5</id>
        <label>ZNF232</label>
    </interactant>
    <organismsDiffer>false</organismsDiffer>
    <experiments>3</experiments>
</comment>
<comment type="interaction">
    <interactant intactId="EBI-11522433">
        <id>Q5JR59-3</id>
    </interactant>
    <interactant intactId="EBI-8787052">
        <id>Q16600</id>
        <label>ZNF239</label>
    </interactant>
    <organismsDiffer>false</organismsDiffer>
    <experiments>3</experiments>
</comment>
<comment type="interaction">
    <interactant intactId="EBI-11522433">
        <id>Q5JR59-3</id>
    </interactant>
    <interactant intactId="EBI-7115319">
        <id>Q14584</id>
        <label>ZNF266</label>
    </interactant>
    <organismsDiffer>false</organismsDiffer>
    <experiments>4</experiments>
</comment>
<comment type="interaction">
    <interactant intactId="EBI-11522433">
        <id>Q5JR59-3</id>
    </interactant>
    <interactant intactId="EBI-7233259">
        <id>Q86UD4</id>
        <label>ZNF329</label>
    </interactant>
    <organismsDiffer>false</organismsDiffer>
    <experiments>4</experiments>
</comment>
<comment type="interaction">
    <interactant intactId="EBI-11522433">
        <id>Q5JR59-3</id>
    </interactant>
    <interactant intactId="EBI-11041653">
        <id>P13682</id>
        <label>ZNF35</label>
    </interactant>
    <organismsDiffer>false</organismsDiffer>
    <experiments>3</experiments>
</comment>
<comment type="interaction">
    <interactant intactId="EBI-11522433">
        <id>Q5JR59-3</id>
    </interactant>
    <interactant intactId="EBI-347633">
        <id>Q9H9D4</id>
        <label>ZNF408</label>
    </interactant>
    <organismsDiffer>false</organismsDiffer>
    <experiments>3</experiments>
</comment>
<comment type="interaction">
    <interactant intactId="EBI-11522433">
        <id>Q5JR59-3</id>
    </interactant>
    <interactant intactId="EBI-744257">
        <id>Q96IQ9</id>
        <label>ZNF414</label>
    </interactant>
    <organismsDiffer>false</organismsDiffer>
    <experiments>3</experiments>
</comment>
<comment type="interaction">
    <interactant intactId="EBI-11522433">
        <id>Q5JR59-3</id>
    </interactant>
    <interactant intactId="EBI-740727">
        <id>Q8TAU3</id>
        <label>ZNF417</label>
    </interactant>
    <organismsDiffer>false</organismsDiffer>
    <experiments>3</experiments>
</comment>
<comment type="interaction">
    <interactant intactId="EBI-11522433">
        <id>Q5JR59-3</id>
    </interactant>
    <interactant intactId="EBI-11962468">
        <id>Q7Z4V0</id>
        <label>ZNF438</label>
    </interactant>
    <organismsDiffer>false</organismsDiffer>
    <experiments>3</experiments>
</comment>
<comment type="interaction">
    <interactant intactId="EBI-11522433">
        <id>Q5JR59-3</id>
    </interactant>
    <interactant intactId="EBI-747580">
        <id>Q8NDP4</id>
        <label>ZNF439</label>
    </interactant>
    <organismsDiffer>false</organismsDiffer>
    <experiments>3</experiments>
</comment>
<comment type="interaction">
    <interactant intactId="EBI-11522433">
        <id>Q5JR59-3</id>
    </interactant>
    <interactant intactId="EBI-726439">
        <id>Q8IYI8</id>
        <label>ZNF440</label>
    </interactant>
    <organismsDiffer>false</organismsDiffer>
    <experiments>3</experiments>
</comment>
<comment type="interaction">
    <interactant intactId="EBI-11522433">
        <id>Q5JR59-3</id>
    </interactant>
    <interactant intactId="EBI-12006434">
        <id>Q96MX3</id>
        <label>ZNF48</label>
    </interactant>
    <organismsDiffer>false</organismsDiffer>
    <experiments>3</experiments>
</comment>
<comment type="interaction">
    <interactant intactId="EBI-11522433">
        <id>Q5JR59-3</id>
    </interactant>
    <interactant intactId="EBI-1105370">
        <id>Q9ULM2</id>
        <label>ZNF490</label>
    </interactant>
    <organismsDiffer>false</organismsDiffer>
    <experiments>3</experiments>
</comment>
<comment type="interaction">
    <interactant intactId="EBI-11522433">
        <id>Q5JR59-3</id>
    </interactant>
    <interactant intactId="EBI-10486136">
        <id>Q6ZNH5</id>
        <label>ZNF497</label>
    </interactant>
    <organismsDiffer>false</organismsDiffer>
    <experiments>3</experiments>
</comment>
<comment type="interaction">
    <interactant intactId="EBI-11522433">
        <id>Q5JR59-3</id>
    </interactant>
    <interactant intactId="EBI-1049952">
        <id>Q96KM6</id>
        <label>ZNF512B</label>
    </interactant>
    <organismsDiffer>false</organismsDiffer>
    <experiments>3</experiments>
</comment>
<comment type="interaction">
    <interactant intactId="EBI-11522433">
        <id>Q5JR59-3</id>
    </interactant>
    <interactant intactId="EBI-10699005">
        <id>Q8N988-2</id>
        <label>ZNF557</label>
    </interactant>
    <organismsDiffer>false</organismsDiffer>
    <experiments>3</experiments>
</comment>
<comment type="interaction">
    <interactant intactId="EBI-11522433">
        <id>Q5JR59-3</id>
    </interactant>
    <interactant intactId="EBI-10273713">
        <id>Q8TBZ8</id>
        <label>ZNF564</label>
    </interactant>
    <organismsDiffer>false</organismsDiffer>
    <experiments>4</experiments>
</comment>
<comment type="interaction">
    <interactant intactId="EBI-11522433">
        <id>Q5JR59-3</id>
    </interactant>
    <interactant intactId="EBI-10172590">
        <id>Q7Z3I7</id>
        <label>ZNF572</label>
    </interactant>
    <organismsDiffer>false</organismsDiffer>
    <experiments>3</experiments>
</comment>
<comment type="interaction">
    <interactant intactId="EBI-11522433">
        <id>Q5JR59-3</id>
    </interactant>
    <interactant intactId="EBI-746277">
        <id>Q9UK33</id>
        <label>ZNF580</label>
    </interactant>
    <organismsDiffer>false</organismsDiffer>
    <experiments>3</experiments>
</comment>
<comment type="interaction">
    <interactant intactId="EBI-11522433">
        <id>Q5JR59-3</id>
    </interactant>
    <interactant intactId="EBI-6427977">
        <id>Q96SQ5</id>
        <label>ZNF587</label>
    </interactant>
    <organismsDiffer>false</organismsDiffer>
    <experiments>5</experiments>
</comment>
<comment type="interaction">
    <interactant intactId="EBI-11522433">
        <id>Q5JR59-3</id>
    </interactant>
    <interactant intactId="EBI-12062855">
        <id>Q6PF04</id>
        <label>ZNF613</label>
    </interactant>
    <organismsDiffer>false</organismsDiffer>
    <experiments>3</experiments>
</comment>
<comment type="interaction">
    <interactant intactId="EBI-11522433">
        <id>Q5JR59-3</id>
    </interactant>
    <interactant intactId="EBI-9116427">
        <id>Q9P2J8</id>
        <label>ZNF624</label>
    </interactant>
    <organismsDiffer>false</organismsDiffer>
    <experiments>6</experiments>
</comment>
<comment type="interaction">
    <interactant intactId="EBI-11522433">
        <id>Q5JR59-3</id>
    </interactant>
    <interactant intactId="EBI-11985915">
        <id>Q5T619</id>
        <label>ZNF648</label>
    </interactant>
    <organismsDiffer>false</organismsDiffer>
    <experiments>3</experiments>
</comment>
<comment type="interaction">
    <interactant intactId="EBI-11522433">
        <id>Q5JR59-3</id>
    </interactant>
    <interactant intactId="EBI-12006574">
        <id>Q96BR6</id>
        <label>ZNF669</label>
    </interactant>
    <organismsDiffer>false</organismsDiffer>
    <experiments>3</experiments>
</comment>
<comment type="interaction">
    <interactant intactId="EBI-11522433">
        <id>Q5JR59-3</id>
    </interactant>
    <interactant intactId="EBI-11090299">
        <id>Q9H7X3</id>
        <label>ZNF696</label>
    </interactant>
    <organismsDiffer>false</organismsDiffer>
    <experiments>3</experiments>
</comment>
<comment type="interaction">
    <interactant intactId="EBI-11522433">
        <id>Q5JR59-3</id>
    </interactant>
    <interactant intactId="EBI-7254550">
        <id>P36508</id>
        <label>ZNF76</label>
    </interactant>
    <organismsDiffer>false</organismsDiffer>
    <experiments>3</experiments>
</comment>
<comment type="interaction">
    <interactant intactId="EBI-11522433">
        <id>Q5JR59-3</id>
    </interactant>
    <interactant intactId="EBI-745775">
        <id>Q96H86</id>
        <label>ZNF764</label>
    </interactant>
    <organismsDiffer>false</organismsDiffer>
    <experiments>3</experiments>
</comment>
<comment type="interaction">
    <interactant intactId="EBI-11522433">
        <id>Q5JR59-3</id>
    </interactant>
    <interactant intactId="EBI-10251462">
        <id>Q6NX45</id>
        <label>ZNF774</label>
    </interactant>
    <organismsDiffer>false</organismsDiffer>
    <experiments>3</experiments>
</comment>
<comment type="interaction">
    <interactant intactId="EBI-11522433">
        <id>Q5JR59-3</id>
    </interactant>
    <interactant intactId="EBI-7149881">
        <id>Q96BV0</id>
        <label>ZNF775</label>
    </interactant>
    <organismsDiffer>false</organismsDiffer>
    <experiments>3</experiments>
</comment>
<comment type="interaction">
    <interactant intactId="EBI-11522433">
        <id>Q5JR59-3</id>
    </interactant>
    <interactant intactId="EBI-3925400">
        <id>A8K8V0</id>
        <label>ZNF785</label>
    </interactant>
    <organismsDiffer>false</organismsDiffer>
    <experiments>3</experiments>
</comment>
<comment type="interaction">
    <interactant intactId="EBI-11522433">
        <id>Q5JR59-3</id>
    </interactant>
    <interactant intactId="EBI-10240849">
        <id>Q3KQV3</id>
        <label>ZNF792</label>
    </interactant>
    <organismsDiffer>false</organismsDiffer>
    <experiments>3</experiments>
</comment>
<comment type="interaction">
    <interactant intactId="EBI-11522433">
        <id>Q5JR59-3</id>
    </interactant>
    <interactant intactId="EBI-11962574">
        <id>Q96EG3</id>
        <label>ZNF837</label>
    </interactant>
    <organismsDiffer>false</organismsDiffer>
    <experiments>3</experiments>
</comment>
<comment type="interaction">
    <interactant intactId="EBI-11522433">
        <id>Q5JR59-3</id>
    </interactant>
    <interactant intactId="EBI-3920053">
        <id>Q16670</id>
        <label>ZSCAN26</label>
    </interactant>
    <organismsDiffer>false</organismsDiffer>
    <experiments>3</experiments>
</comment>
<comment type="subcellular location">
    <subcellularLocation>
        <location evidence="3">Cytoplasm</location>
        <location evidence="3">Cytoskeleton</location>
    </subcellularLocation>
    <text>Associated with the microtubule network at the growing distal tip (the plus-end) of microtubules.</text>
</comment>
<comment type="alternative products">
    <event type="alternative splicing"/>
    <isoform>
        <id>Q5JR59-2</id>
        <name>1</name>
        <sequence type="displayed"/>
    </isoform>
    <isoform>
        <id>Q5JR59-3</id>
        <name>2</name>
        <sequence type="described" ref="VSP_023541 VSP_023543"/>
    </isoform>
    <isoform>
        <id>Q5JR59-4</id>
        <name>3</name>
        <sequence type="described" ref="VSP_023540"/>
    </isoform>
</comment>
<comment type="tissue specificity">
    <text evidence="4">Detected in embryonic stem cells differentiating to cardiomyocytes.</text>
</comment>
<comment type="similarity">
    <text evidence="7">In the C-terminal section; belongs to the MTUS1 family.</text>
</comment>
<comment type="sequence caution" evidence="7">
    <conflict type="erroneous initiation">
        <sequence resource="EMBL-CDS" id="AAI50246"/>
    </conflict>
</comment>
<comment type="sequence caution" evidence="7">
    <conflict type="erroneous initiation">
        <sequence resource="EMBL-CDS" id="BAA34494"/>
    </conflict>
</comment>
<protein>
    <recommendedName>
        <fullName>Microtubule-associated tumor suppressor candidate 2</fullName>
    </recommendedName>
    <alternativeName>
        <fullName>Cardiac zipper protein</fullName>
    </alternativeName>
    <alternativeName>
        <fullName>Microtubule plus-end tracking protein TIP150</fullName>
        <shortName>Tracking protein of 150 kDa</shortName>
    </alternativeName>
</protein>